<gene>
    <name evidence="70 74" type="primary">MAVS</name>
    <name type="synonym">IPS1</name>
    <name type="synonym">KIAA1271</name>
    <name type="synonym">VISA</name>
</gene>
<feature type="initiator methionine" description="Removed" evidence="65">
    <location>
        <position position="1"/>
    </location>
</feature>
<feature type="chain" id="PRO_0000144096" description="Mitochondrial antiviral-signaling protein">
    <location>
        <begin position="2"/>
        <end position="540"/>
    </location>
</feature>
<feature type="topological domain" description="Cytoplasmic" evidence="73">
    <location>
        <begin position="2"/>
        <end position="513"/>
    </location>
</feature>
<feature type="transmembrane region" description="Helical" evidence="3">
    <location>
        <begin position="514"/>
        <end position="534"/>
    </location>
</feature>
<feature type="topological domain" description="Mitochondrial intermembrane" evidence="73">
    <location>
        <begin position="535"/>
        <end position="540"/>
    </location>
</feature>
<feature type="domain" description="CARD">
    <location>
        <begin position="10"/>
        <end position="77"/>
    </location>
</feature>
<feature type="region of interest" description="Required for interaction with NLRX1" evidence="19">
    <location>
        <begin position="10"/>
        <end position="77"/>
    </location>
</feature>
<feature type="region of interest" description="Disordered" evidence="4">
    <location>
        <begin position="95"/>
        <end position="297"/>
    </location>
</feature>
<feature type="region of interest" description="Interaction with TRAF2" evidence="10">
    <location>
        <begin position="143"/>
        <end position="147"/>
    </location>
</feature>
<feature type="region of interest" description="Interaction with TRAF6">
    <location>
        <begin position="153"/>
        <end position="158"/>
    </location>
</feature>
<feature type="region of interest" description="Disordered" evidence="4">
    <location>
        <begin position="314"/>
        <end position="358"/>
    </location>
</feature>
<feature type="region of interest" description="Disordered" evidence="4">
    <location>
        <begin position="373"/>
        <end position="419"/>
    </location>
</feature>
<feature type="region of interest" description="Interaction with TRAF6">
    <location>
        <begin position="455"/>
        <end position="460"/>
    </location>
</feature>
<feature type="region of interest" description="Disordered" evidence="4">
    <location>
        <begin position="476"/>
        <end position="507"/>
    </location>
</feature>
<feature type="short sequence motif" description="pLxIS motif" evidence="44">
    <location>
        <begin position="439"/>
        <end position="442"/>
    </location>
</feature>
<feature type="compositionally biased region" description="Pro residues" evidence="4">
    <location>
        <begin position="106"/>
        <end position="122"/>
    </location>
</feature>
<feature type="compositionally biased region" description="Polar residues" evidence="4">
    <location>
        <begin position="145"/>
        <end position="165"/>
    </location>
</feature>
<feature type="compositionally biased region" description="Polar residues" evidence="4">
    <location>
        <begin position="179"/>
        <end position="216"/>
    </location>
</feature>
<feature type="compositionally biased region" description="Low complexity" evidence="4">
    <location>
        <begin position="241"/>
        <end position="266"/>
    </location>
</feature>
<feature type="compositionally biased region" description="Polar residues" evidence="4">
    <location>
        <begin position="317"/>
        <end position="331"/>
    </location>
</feature>
<feature type="compositionally biased region" description="Polar residues" evidence="4">
    <location>
        <begin position="339"/>
        <end position="355"/>
    </location>
</feature>
<feature type="compositionally biased region" description="Polar residues" evidence="4">
    <location>
        <begin position="373"/>
        <end position="382"/>
    </location>
</feature>
<feature type="compositionally biased region" description="Low complexity" evidence="4">
    <location>
        <begin position="388"/>
        <end position="403"/>
    </location>
</feature>
<feature type="compositionally biased region" description="Basic and acidic residues" evidence="4">
    <location>
        <begin position="496"/>
        <end position="507"/>
    </location>
</feature>
<feature type="site" description="(Microbial infection) Cleavage; by viral Seneca Valley virus protease 3C" evidence="53">
    <location>
        <begin position="148"/>
        <end position="149"/>
    </location>
</feature>
<feature type="site" description="(Microbial infection) Cleavage by CV3B" evidence="31">
    <location>
        <position position="148"/>
    </location>
</feature>
<feature type="site" description="(Microbial infection) Cleavage by protease 2A of enterovirus 71" evidence="51">
    <location>
        <begin position="208"/>
        <end position="209"/>
    </location>
</feature>
<feature type="site" description="(Microbial infection) Cleavage by protease 2A of enterovirus 71" evidence="51">
    <location>
        <begin position="250"/>
        <end position="251"/>
    </location>
</feature>
<feature type="site" description="(Microbial infection) Cleavage by protease 2A of enterovirus 71" evidence="51">
    <location>
        <begin position="264"/>
        <end position="265"/>
    </location>
</feature>
<feature type="site" description="(Microbial infection) Cleavage; by HAV protein 3ABC" evidence="15">
    <location>
        <begin position="427"/>
        <end position="428"/>
    </location>
</feature>
<feature type="site" description="Cleavage; by CASP3" evidence="55">
    <location>
        <begin position="429"/>
        <end position="430"/>
    </location>
</feature>
<feature type="site" description="Cleavage; by CASP3" evidence="55">
    <location>
        <begin position="490"/>
        <end position="491"/>
    </location>
</feature>
<feature type="site" description="(Microbial infection) Cleavage; by HCV and hepatitis GB virus B NS3/4A protease complex" evidence="11 12">
    <location>
        <begin position="508"/>
        <end position="509"/>
    </location>
</feature>
<feature type="modified residue" description="N-acetylproline" evidence="65">
    <location>
        <position position="2"/>
    </location>
</feature>
<feature type="modified residue" description="Phosphoserine" evidence="77 78 81">
    <location>
        <position position="152"/>
    </location>
</feature>
<feature type="modified residue" description="Phosphoserine" evidence="77">
    <location>
        <position position="157"/>
    </location>
</feature>
<feature type="modified residue" description="Phosphoserine" evidence="77 78 81">
    <location>
        <position position="165"/>
    </location>
</feature>
<feature type="modified residue" description="Phosphoserine" evidence="81">
    <location>
        <position position="180"/>
    </location>
</feature>
<feature type="modified residue" description="Phosphoserine" evidence="81">
    <location>
        <position position="188"/>
    </location>
</feature>
<feature type="modified residue" description="Phosphothreonine" evidence="81">
    <location>
        <position position="215"/>
    </location>
</feature>
<feature type="modified residue" description="Phosphoserine" evidence="76 77 80 81">
    <location>
        <position position="222"/>
    </location>
</feature>
<feature type="modified residue" description="Phosphoserine" evidence="77">
    <location>
        <position position="233"/>
    </location>
</feature>
<feature type="modified residue" description="Phosphothreonine" evidence="77">
    <location>
        <position position="234"/>
    </location>
</feature>
<feature type="modified residue" description="Asymmetric dimethylarginine" evidence="2">
    <location>
        <position position="236"/>
    </location>
</feature>
<feature type="modified residue" description="Phosphoserine" evidence="79">
    <location>
        <position position="253"/>
    </location>
</feature>
<feature type="modified residue" description="Phosphoserine" evidence="77 79">
    <location>
        <position position="258"/>
    </location>
</feature>
<feature type="modified residue" description="Phosphoserine" evidence="2">
    <location>
        <position position="408"/>
    </location>
</feature>
<feature type="modified residue" description="Phosphoserine; by TBK1" evidence="44 46">
    <location>
        <position position="442"/>
    </location>
</feature>
<feature type="lipid moiety-binding region" description="S-palmitoyl cysteine" evidence="68">
    <location>
        <position position="79"/>
    </location>
</feature>
<feature type="cross-link" description="Glycyl lysine isopeptide (Lys-Gly) (interchain with G-Cter in ubiquitin)" evidence="45">
    <location>
        <position position="7"/>
    </location>
</feature>
<feature type="cross-link" description="Glycyl lysine isopeptide (Lys-Gly) (interchain with G-Cter in ubiquitin)" evidence="49">
    <location>
        <position position="10"/>
    </location>
</feature>
<feature type="cross-link" description="Glycyl lysine isopeptide (Lys-Gly) (interchain with G-Cter in ubiquitin)" evidence="49">
    <location>
        <position position="311"/>
    </location>
</feature>
<feature type="cross-link" description="Glycyl lysine isopeptide (Lys-Gly) (interchain with G-Cter in ubiquitin)" evidence="54">
    <location>
        <position position="325"/>
    </location>
</feature>
<feature type="cross-link" description="(Microbial infection) Glycyl lysine isopeptide (Lys-Gly) (interchain with G-Cter in UFM1)" evidence="64">
    <location>
        <position position="461"/>
    </location>
</feature>
<feature type="cross-link" description="Glycyl lysine isopeptide (Lys-Gly) (interchain with G-Cter in ubiquitin)" evidence="49">
    <location>
        <position position="461"/>
    </location>
</feature>
<feature type="cross-link" description="Glycyl lysine isopeptide (Lys-Gly) (interchain with G-Cter in ubiquitin)" evidence="45">
    <location>
        <position position="500"/>
    </location>
</feature>
<feature type="splice variant" id="VSP_045872" description="In isoform 4." evidence="69">
    <location>
        <begin position="1"/>
        <end position="141"/>
    </location>
</feature>
<feature type="splice variant" id="VSP_047816" description="In isoform 6." evidence="72">
    <original>DRLRATCTLSGNRDTLWHLFNTLQRRPGWVEYFIAALRGCELVDLADEVASVYQSYQPRTSDRPPDPLEPPSLPAERPGPPTPAAAHSIPYN</original>
    <variation>GPRTVPQTHWSHRHFLLRGQGPPHLLRPTASPTTAAERRSQVTPCLSRRPRRQSPQERIQSKPCRRSAPEPSQGIQMVAPWSPPLTWQPSAL</variation>
    <location>
        <begin position="40"/>
        <end position="131"/>
    </location>
</feature>
<feature type="splice variant" id="VSP_010261" description="In isoform 3." evidence="69">
    <original>RRPGWVEYFIAALRGCELVDLADEVASVYQSYQPRTSDRPPDPLEPPSLPAERPGPPTPAAAHSIPYNSCREKEPSYPMPVQETQ</original>
    <variation>LPTWAGEETPGGQSSGRGLDFSSLTSGAVWLWQMSDFWSCFSTWTVSIWLILHWVLLRLNLQVFAKCLAQSKWPLLLPSLSCPTW</variation>
    <location>
        <begin position="64"/>
        <end position="148"/>
    </location>
</feature>
<feature type="splice variant" id="VSP_047817" description="In isoform 5." evidence="69 72">
    <original>RTSDRPPDPLEPPSLPAERPGPPTPAA</original>
    <variation>QFRASPADAQPQSHPKESRWWPPGVLL</variation>
    <location>
        <begin position="98"/>
        <end position="124"/>
    </location>
</feature>
<feature type="splice variant" id="VSP_010262" description="In isoform 2." evidence="69">
    <original>TSDRPPDPLEPPSLPAERPGPPTPAAAHSIPYN</original>
    <variation>ERPALALLDPQPAPWPPLSFSLSLYFLPFSVILFLVTVKR</variation>
    <location>
        <begin position="99"/>
        <end position="131"/>
    </location>
</feature>
<feature type="splice variant" id="VSP_047818" description="In isoform 5." evidence="69 72">
    <location>
        <begin position="125"/>
        <end position="540"/>
    </location>
</feature>
<feature type="splice variant" id="VSP_010263" description="In isoform 2 and isoform 6." evidence="69 72">
    <location>
        <begin position="132"/>
        <end position="540"/>
    </location>
</feature>
<feature type="splice variant" id="VSP_010264" description="In isoform 3." evidence="69">
    <location>
        <begin position="149"/>
        <end position="540"/>
    </location>
</feature>
<feature type="sequence variant" id="VAR_048609" description="In dbSNP:rs11905552.">
    <original>C</original>
    <variation>F</variation>
    <location>
        <position position="79"/>
    </location>
</feature>
<feature type="sequence variant" id="VAR_059197" description="Loss of palmitoylation; dbSNP:rs11908032." evidence="68">
    <original>C</original>
    <variation>S</variation>
    <location>
        <position position="79"/>
    </location>
</feature>
<feature type="sequence variant" id="VAR_048610" description="In dbSNP:rs17857295." evidence="6 7 9 10">
    <original>Q</original>
    <variation>E</variation>
    <location>
        <position position="93"/>
    </location>
</feature>
<feature type="sequence variant" id="VAR_048611" description="In dbSNP:rs7262903." evidence="7 8 11">
    <original>Q</original>
    <variation>K</variation>
    <location>
        <position position="198"/>
    </location>
</feature>
<feature type="sequence variant" id="VAR_018448" description="In dbSNP:rs7269320." evidence="7 8 11">
    <original>S</original>
    <variation>F</variation>
    <location>
        <position position="409"/>
    </location>
</feature>
<feature type="mutagenesis site" description="Abolished ubiquitination by MARCHF5; when associated with R-500." evidence="45">
    <original>K</original>
    <variation>R</variation>
    <location>
        <position position="7"/>
    </location>
</feature>
<feature type="mutagenesis site" description="Abolished ubiquitination by TRIM31; when associated with R-311 and R-461." evidence="37">
    <original>K</original>
    <variation>R</variation>
    <location>
        <position position="10"/>
    </location>
</feature>
<feature type="mutagenesis site" description="Impairs filament formation and abolishes antiviral signaling activity." evidence="40">
    <original>E</original>
    <variation>A</variation>
    <variation>R</variation>
    <location>
        <position position="26"/>
    </location>
</feature>
<feature type="mutagenesis site" description="Impairs ability to induce IFN-beta. Loss of interaction with the ATG5-ATG12 conjugate." evidence="8 18">
    <original>T</original>
    <variation>A</variation>
    <location>
        <position position="54"/>
    </location>
</feature>
<feature type="mutagenesis site" description="Impairs filament formation and abolishes antiviral signaling activity." evidence="40">
    <original>W</original>
    <variation>A</variation>
    <variation>E</variation>
    <variation>R</variation>
    <location>
        <position position="56"/>
    </location>
</feature>
<feature type="mutagenesis site" description="Impairs ability to induce IFN-beta." evidence="8">
    <original>GWV</original>
    <variation>AAA</variation>
    <location>
        <begin position="67"/>
        <end position="69"/>
    </location>
</feature>
<feature type="mutagenesis site" description="No interaction with TRAF2." evidence="10">
    <original>Q</original>
    <variation>N</variation>
    <location>
        <position position="145"/>
    </location>
</feature>
<feature type="mutagenesis site" description="Complete loss of cleavage by Seneca Valley virus protease 3C." evidence="53">
    <original>Q</original>
    <variation>A</variation>
    <location>
        <position position="148"/>
    </location>
</feature>
<feature type="mutagenesis site" description="No interaction with TRAF6; when associated with D-457." evidence="10">
    <original>E</original>
    <variation>D</variation>
    <location>
        <position position="155"/>
    </location>
</feature>
<feature type="mutagenesis site" description="No effect on cleavage by Seneca Valley virus protease 3C." evidence="53">
    <original>Q</original>
    <variation>A</variation>
    <location>
        <position position="159"/>
    </location>
</feature>
<feature type="mutagenesis site" description="No effect on cleavage by Seneca Valley virus protease 3C." evidence="53">
    <original>Q</original>
    <variation>A</variation>
    <location>
        <position position="162"/>
    </location>
</feature>
<feature type="mutagenesis site" description="No effect on cleavage by Seneca Valley virus protease 3C." evidence="53">
    <original>Q</original>
    <variation>A</variation>
    <location>
        <position position="196"/>
    </location>
</feature>
<feature type="mutagenesis site" description="No effect on cleavage by Seneca Valley virus protease 3C." evidence="53">
    <original>Q</original>
    <variation>A</variation>
    <location>
        <position position="198"/>
    </location>
</feature>
<feature type="mutagenesis site" description="Complete loss of cleavage by protease 2A of enterovirus 71." evidence="51">
    <original>G</original>
    <variation>A</variation>
    <location>
        <position position="209"/>
    </location>
</feature>
<feature type="mutagenesis site" description="Complete loss of cleavage by protease 2A of enterovirus 71." evidence="51">
    <original>G</original>
    <variation>A</variation>
    <location>
        <position position="251"/>
    </location>
</feature>
<feature type="mutagenesis site" description="Complete loss of cleavage by enterovirus 71." evidence="51">
    <original>G</original>
    <variation>A</variation>
    <location>
        <position position="265"/>
    </location>
</feature>
<feature type="mutagenesis site" description="Abolished ubiquitination by TRIM31; when associated with R-10 and R-461." evidence="37">
    <original>K</original>
    <variation>R</variation>
    <location>
        <position position="311"/>
    </location>
</feature>
<feature type="mutagenesis site" description="Abolished ubiquitination by TRIM21." evidence="54">
    <original>K</original>
    <variation>R</variation>
    <location>
        <position position="325"/>
    </location>
</feature>
<feature type="mutagenesis site" description="No cleavage by HHAV 3ABC." evidence="15">
    <original>Q</original>
    <variation>A</variation>
    <location>
        <position position="427"/>
    </location>
</feature>
<feature type="mutagenesis site" description="Decreased cleavage by CASP3. Abolished cleavage by CASP3; when associated with A-490." evidence="55">
    <original>D</original>
    <variation>A</variation>
    <location>
        <position position="429"/>
    </location>
</feature>
<feature type="mutagenesis site" description="No effect on cleavage by NS3/4A protease complex." evidence="12">
    <original>C</original>
    <variation>R</variation>
    <location>
        <position position="435"/>
    </location>
</feature>
<feature type="mutagenesis site" description="Abolished ability to bind and activate IRF3." evidence="44 46">
    <original>S</original>
    <variation>A</variation>
    <location>
        <position position="442"/>
    </location>
</feature>
<feature type="mutagenesis site" description="No effect on cleavage by NS3/4A protease complex." evidence="12">
    <original>C</original>
    <variation>R</variation>
    <location>
        <position position="452"/>
    </location>
</feature>
<feature type="mutagenesis site" description="No interaction with TRAF6; when associated with D-155." evidence="10">
    <original>E</original>
    <variation>D</variation>
    <location>
        <position position="457"/>
    </location>
</feature>
<feature type="mutagenesis site" description="Abolished ubiquitination by TRIM31; when associated with R-10 and R-311." evidence="37">
    <original>K</original>
    <variation>R</variation>
    <location>
        <position position="461"/>
    </location>
</feature>
<feature type="mutagenesis site" description="Abolished UFMylation by UFM1." evidence="64">
    <original>K</original>
    <variation>R</variation>
    <location>
        <position position="461"/>
    </location>
</feature>
<feature type="mutagenesis site" description="No effect on cleavage by HHAV 3ABC." evidence="15">
    <original>E</original>
    <variation>A</variation>
    <location>
        <position position="463"/>
    </location>
</feature>
<feature type="mutagenesis site" description="Decreased cleavage by CASP3. Abolished cleavage by CASP3; when associated with A-429." evidence="55">
    <original>D</original>
    <variation>A</variation>
    <location>
        <position position="490"/>
    </location>
</feature>
<feature type="mutagenesis site" description="Abolished ubiquitination by MARCH5; when associated with R-7." evidence="45">
    <original>K</original>
    <variation>R</variation>
    <location>
        <position position="500"/>
    </location>
</feature>
<feature type="mutagenesis site" description="No cleavage by HCV and hepatitis GB virus B NS3/4A protease complex." evidence="11 12 14">
    <original>C</original>
    <variation>A</variation>
    <variation>R</variation>
    <location>
        <position position="508"/>
    </location>
</feature>
<feature type="sequence conflict" description="In Ref. 8; BAC77356." evidence="73" ref="8">
    <original>L</original>
    <variation>P</variation>
    <location>
        <position position="42"/>
    </location>
</feature>
<feature type="sequence conflict" description="In Ref. 9; BAF84474." evidence="73" ref="9">
    <original>T</original>
    <variation>N</variation>
    <location>
        <position position="191"/>
    </location>
</feature>
<feature type="sequence conflict" description="In Ref. 8; BAC77356." evidence="73" ref="8">
    <original>A</original>
    <variation>V</variation>
    <location>
        <position position="356"/>
    </location>
</feature>
<feature type="sequence conflict" description="In Ref. 8; BAC77356." evidence="73" ref="8">
    <original>S</original>
    <variation>P</variation>
    <location>
        <position position="373"/>
    </location>
</feature>
<feature type="helix" evidence="83">
    <location>
        <begin position="3"/>
        <end position="14"/>
    </location>
</feature>
<feature type="helix" evidence="83">
    <location>
        <begin position="16"/>
        <end position="19"/>
    </location>
</feature>
<feature type="helix" evidence="83">
    <location>
        <begin position="24"/>
        <end position="27"/>
    </location>
</feature>
<feature type="helix" evidence="83">
    <location>
        <begin position="28"/>
        <end position="30"/>
    </location>
</feature>
<feature type="helix" evidence="83">
    <location>
        <begin position="36"/>
        <end position="49"/>
    </location>
</feature>
<feature type="helix" evidence="83">
    <location>
        <begin position="51"/>
        <end position="62"/>
    </location>
</feature>
<feature type="helix" evidence="83">
    <location>
        <begin position="68"/>
        <end position="78"/>
    </location>
</feature>
<feature type="helix" evidence="83">
    <location>
        <begin position="82"/>
        <end position="92"/>
    </location>
</feature>
<feature type="strand" evidence="82">
    <location>
        <begin position="95"/>
        <end position="97"/>
    </location>
</feature>
<feature type="strand" evidence="85">
    <location>
        <begin position="456"/>
        <end position="459"/>
    </location>
</feature>
<feature type="strand" evidence="84">
    <location>
        <begin position="504"/>
        <end position="507"/>
    </location>
</feature>
<feature type="initiator methionine" description="Removed" evidence="65">
    <location sequence="Q7Z434-4">
        <position position="1"/>
    </location>
</feature>
<feature type="modified residue" description="N-acetylproline" evidence="65">
    <location sequence="Q7Z434-4">
        <position position="2"/>
    </location>
</feature>
<name>MAVS_HUMAN</name>
<comment type="function">
    <text evidence="8 9 10 11 24 27 28 29 30 34 37 44 47 49 59 60 66">Adapter required for innate immune defense against viruses (PubMed:16125763, PubMed:16127453, PubMed:16153868, PubMed:16177806, PubMed:19631370, PubMed:20127681, PubMed:20451243, PubMed:21170385, PubMed:23087404, PubMed:27992402, PubMed:33139700, PubMed:37582970). Acts downstream of DHX33, RIGI and IFIH1/MDA5, which detect intracellular dsRNA produced during viral replication, to coordinate pathways leading to the activation of NF-kappa-B, IRF3 and IRF7, and to the subsequent induction of antiviral cytokines such as IFNB and RANTES (CCL5) (PubMed:16125763, PubMed:16127453, PubMed:16153868, PubMed:16177806, PubMed:19631370, PubMed:20127681, PubMed:20451243, PubMed:20628368, PubMed:21170385, PubMed:23087404, PubMed:25636800, PubMed:27736772, PubMed:33110251). Peroxisomal and mitochondrial MAVS act sequentially to create an antiviral cellular state (PubMed:20451243). Upon viral infection, peroxisomal MAVS induces the rapid interferon-independent expression of defense factors that provide short-term protection, whereas mitochondrial MAVS activates an interferon-dependent signaling pathway with delayed kinetics, which amplifies and stabilizes the antiviral response (PubMed:20451243). May activate the same pathways following detection of extracellular dsRNA by TLR3 (PubMed:16153868). May protect cells from apoptosis (PubMed:16125763). Involved in NLRP3 inflammasome activation by mediating NLRP3 recruitment to mitochondria (PubMed:23582325).</text>
</comment>
<comment type="subunit">
    <text evidence="1 2 8 9 10 11 13 17 18 19 20 21 22 23 25 26 27 29 30 32 34 35 36 37 38 40 41 43 44 45 46 47 48 49 50 52 56 57 59 62 63 67">Self-associates and polymerizes (via CARD domains) to form 400 nM long three-stranded helical filaments on mitochondria, filament nucleation requires interaction with RIGI whose CARD domains act as a template for filament assembly (PubMed:24569476, PubMed:25018021, PubMed:27992402, PubMed:26246171). Interacts with RIGI, IFIH1/MDA5, TRAF2, TRAF6 and C1QBP (PubMed:16125763, PubMed:16127453, PubMed:17600090, PubMed:33110251). May interact with FADD, RIPK1, CHUK and IKBKB (PubMed:16127453, PubMed:16153868, PubMed:16177806). Interacts (when phosphorylated) with IRF3; following activation and phosphorylation on the pLxIS motif by TBK1, recruits IRF3 (PubMed:25636800, PubMed:27302953, PubMed:33110251). Interacts with NLRX1 (PubMed:18200010). Interaction with NLRX1 requires the CARD domain (PubMed:18200010). Interacts with PSMA7 (PubMed:19734229). Interacts with TRAFD1 (By similarity). Interacts (via C-terminus) with PCBP2 in a complex containing MAVS/IPS1, PCBP2 and ITCH (PubMed:19881509). Interacts with CYLD (PubMed:18636086). Interacts with SRC (PubMed:19419966). Interacts with DHX58/LGP2 and IKBKE (PubMed:16177806, PubMed:17020950, PubMed:28011935). Interacts with STING1 (PubMed:19416887). Interacts with IFIT3 (via N-terminus) (PubMed:21813773). Interacts with TBK1 only in the presence of IFIT3 (PubMed:21813773, PubMed:28011935, PubMed:29743353). Interacts with TTLL12; the interaction prevents MAVS binding to TBK1 and IKBKE (PubMed:28011935). Interacts with MUL1 (PubMed:23399697). Interacts with ANKRD17 (PubMed:23711367). Interacts with NDFIP1 (PubMed:23087404). Interacts with SMURF1; the interaction is mediated by NDFIP1 and leads to MAVS ubiquitination and degradation (PubMed:23087404). Interacts with UBXN1; this interaction inhibits MAVS-mediated antiviral pathway (PubMed:23545497). Interacts (via C-terminus) with GPATCH3; the interaction is markedly increased upon viral infection (PubMed:28414768). Directly interacts (via CARD domain) with ATG5 and ATG12, either as ATG5 and ATG12 monomers or as ATG12-ATG5 conjugates (PubMed:17709747). Interacts with DHX33 (via the helicase C-terminal domain) (By similarity). Interacts with DDX3X (via C-terminus); this interaction occurs rapidly, but transiently after Sendai virus infection (PubMed:20127681, PubMed:21170385, PubMed:27980081). The interaction with DDX3X potentiates MAVS-mediated IFNB induction (PubMed:20127681). Conversely inhibition of this interaction, for instance by HCV core protein, prevents MAVS-mediated IFNB induction (PubMed:21170385). Transiently interacts with TRAF3 early during Sendai virus infection (PubMed:27980081). Interacts with CLPB; the interaction is enhanced by Sendai virus infection (PubMed:31522117). Interacts with TRAF3IP3 (PubMed:31390091). Interacts with TOMM70; the interaction is enhanced by Sendai virus infection (PubMed:20628368). Interacts with ZNFX1 (By similarity). Interacts with N4BP3; this interaction promotes the polyubiquitination of MAVS (PubMed:34880843). Interacts with TAX1BP1; this interaction induces MAVS polyubiquitination (PubMed:27736772). Interacts with NLRP3; promoting NLRP3 recruitment to mitochondria and activation of the NLRP3 inflammasome (PubMed:23582325). Interacts with ECSIT; this interaction bridges RIGI to the MAVS complex at the mitochondrion (PubMed:25228397). Interacts with UBL7; this interaction promotes MAVS 'Lys-27'-linked ubiquitination leading to type I interferon production (PubMed:36943869). Interacts (via transmembrane domain) with SMIM30/MAVI1 (via transmembrane domain); the interaction disrupts MAVS interaction with RIGI and inhibits MAVS aggregation, resulting in the repression of type I interferon signaling and innate immune responses (PubMed:37656786).</text>
</comment>
<comment type="subunit">
    <text evidence="11 12">(Microbial infection) Interacts with hepatitis C virus (HCV) NS3/4A protease; this interaction leads to MAVS cleavage, thereby preventing the establishment of an antiviral state.</text>
</comment>
<comment type="subunit">
    <text evidence="14">(Microbial infection) Interacts with hepatitis GB virus B NS3/4A protease; this interaction leads to MAVS cleavage.</text>
</comment>
<comment type="subunit">
    <text evidence="33">(Microbial infection) Interacts with human respiratory syncytial virus/HRSV protein NS1; this interaction disrupts MAVS binding to RIGI.</text>
</comment>
<comment type="subunit">
    <text evidence="58">(Microbial infection) Interacts with Andes virus Nnon-structural protein NS-S; this interaction may reduce MAVS ubiquitination and leads to inhibition of MAVS-induced type-I IFN signaling pathway.</text>
</comment>
<comment type="subunit">
    <text evidence="53">(Microbial infection) Interacts with Seneca Valley virus protease 3C; this interaction allows the cleavage of MAVS and subsequent suppression of host innate immunity.</text>
</comment>
<comment type="subunit">
    <text evidence="42">(Microbial infection) Interacts with SARS-CoV virus protein ORF9b; this interaction mediates MAVS proteasomal degradation.</text>
</comment>
<comment type="subunit">
    <text evidence="59">(Microbial infection) Interacts with SARS-CoV-2 virus protein M; this interaction impairs MAVS self-association and its recruitment of downstream components.</text>
</comment>
<comment type="subunit">
    <text evidence="61">(Microbial infection) Interacts with foot-and-mouth disease virus protein VP1; this interaction competes with TRAF3 interaction to MAVS leading to suppression of host innate immunity.</text>
</comment>
<comment type="subunit">
    <text evidence="64">(Microbial infection) Interacts with Epstein-Barr virus protein BILF1; this interaction mediates MAVS routing from mitochondria to lysosomes.</text>
</comment>
<comment type="interaction">
    <interactant intactId="EBI-995373">
        <id>Q7Z434</id>
    </interactant>
    <interactant intactId="EBI-375543">
        <id>P00519</id>
        <label>ABL1</label>
    </interactant>
    <organismsDiffer>false</organismsDiffer>
    <experiments>6</experiments>
</comment>
<comment type="interaction">
    <interactant intactId="EBI-995373">
        <id>Q7Z434</id>
    </interactant>
    <interactant intactId="EBI-347552">
        <id>P46379</id>
        <label>BAG6</label>
    </interactant>
    <organismsDiffer>false</organismsDiffer>
    <experiments>2</experiments>
</comment>
<comment type="interaction">
    <interactant intactId="EBI-995373">
        <id>Q7Z434</id>
    </interactant>
    <interactant intactId="EBI-347528">
        <id>Q07021</id>
        <label>C1QBP</label>
    </interactant>
    <organismsDiffer>false</organismsDiffer>
    <experiments>5</experiments>
</comment>
<comment type="interaction">
    <interactant intactId="EBI-995373">
        <id>Q7Z434</id>
    </interactant>
    <interactant intactId="EBI-739580">
        <id>Q13137</id>
        <label>CALCOCO2</label>
    </interactant>
    <organismsDiffer>false</organismsDiffer>
    <experiments>3</experiments>
</comment>
<comment type="interaction">
    <interactant intactId="EBI-995373">
        <id>Q7Z434</id>
    </interactant>
    <interactant intactId="EBI-1049597">
        <id>P27797</id>
        <label>CALR</label>
    </interactant>
    <organismsDiffer>false</organismsDiffer>
    <experiments>3</experiments>
</comment>
<comment type="interaction">
    <interactant intactId="EBI-995373">
        <id>Q7Z434</id>
    </interactant>
    <interactant intactId="EBI-727477">
        <id>P12830</id>
        <label>CDH1</label>
    </interactant>
    <organismsDiffer>false</organismsDiffer>
    <experiments>3</experiments>
</comment>
<comment type="interaction">
    <interactant intactId="EBI-995373">
        <id>Q7Z434</id>
    </interactant>
    <interactant intactId="EBI-353779">
        <id>O00571</id>
        <label>DDX3X</label>
    </interactant>
    <organismsDiffer>false</organismsDiffer>
    <experiments>4</experiments>
</comment>
<comment type="interaction">
    <interactant intactId="EBI-995373">
        <id>Q7Z434</id>
    </interactant>
    <interactant intactId="EBI-351007">
        <id>P36957</id>
        <label>DLST</label>
    </interactant>
    <organismsDiffer>false</organismsDiffer>
    <experiments>3</experiments>
</comment>
<comment type="interaction">
    <interactant intactId="EBI-995373">
        <id>Q7Z434</id>
    </interactant>
    <interactant intactId="EBI-6115771">
        <id>Q9BYX4</id>
        <label>IFIH1</label>
    </interactant>
    <organismsDiffer>false</organismsDiffer>
    <experiments>7</experiments>
</comment>
<comment type="interaction">
    <interactant intactId="EBI-995373">
        <id>Q7Z434</id>
    </interactant>
    <interactant intactId="EBI-307369">
        <id>Q14164</id>
        <label>IKBKE</label>
    </interactant>
    <organismsDiffer>false</organismsDiffer>
    <experiments>4</experiments>
</comment>
<comment type="interaction">
    <interactant intactId="EBI-995373">
        <id>Q7Z434</id>
    </interactant>
    <interactant intactId="EBI-3931258">
        <id>Q13568</id>
        <label>IRF5</label>
    </interactant>
    <organismsDiffer>false</organismsDiffer>
    <experiments>2</experiments>
</comment>
<comment type="interaction">
    <interactant intactId="EBI-995373">
        <id>Q7Z434</id>
    </interactant>
    <interactant intactId="EBI-751501">
        <id>Q9Y2W7</id>
        <label>KCNIP3</label>
    </interactant>
    <organismsDiffer>false</organismsDiffer>
    <experiments>3</experiments>
</comment>
<comment type="interaction">
    <interactant intactId="EBI-995373">
        <id>Q7Z434</id>
    </interactant>
    <interactant intactId="EBI-1048197">
        <id>Q8IWA4</id>
        <label>MFN1</label>
    </interactant>
    <organismsDiffer>false</organismsDiffer>
    <experiments>2</experiments>
</comment>
<comment type="interaction">
    <interactant intactId="EBI-995373">
        <id>Q7Z434</id>
    </interactant>
    <interactant intactId="EBI-1055945">
        <id>Q8TDX7</id>
        <label>NEK7</label>
    </interactant>
    <organismsDiffer>false</organismsDiffer>
    <experiments>3</experiments>
</comment>
<comment type="interaction">
    <interactant intactId="EBI-995373">
        <id>Q7Z434</id>
    </interactant>
    <interactant intactId="EBI-6253230">
        <id>Q96P20</id>
        <label>NLRP3</label>
    </interactant>
    <organismsDiffer>false</organismsDiffer>
    <experiments>4</experiments>
</comment>
<comment type="interaction">
    <interactant intactId="EBI-995373">
        <id>Q7Z434</id>
    </interactant>
    <interactant intactId="EBI-6115729">
        <id>Q9Y6K5</id>
        <label>OAS3</label>
    </interactant>
    <organismsDiffer>false</organismsDiffer>
    <experiments>2</experiments>
</comment>
<comment type="interaction">
    <interactant intactId="EBI-995373">
        <id>Q7Z434</id>
    </interactant>
    <interactant intactId="EBI-995350">
        <id>O95786</id>
        <label>RIGI</label>
    </interactant>
    <organismsDiffer>false</organismsDiffer>
    <experiments>19</experiments>
</comment>
<comment type="interaction">
    <interactant intactId="EBI-995373">
        <id>Q7Z434</id>
    </interactant>
    <interactant intactId="EBI-358522">
        <id>O43353</id>
        <label>RIPK2</label>
    </interactant>
    <organismsDiffer>false</organismsDiffer>
    <experiments>3</experiments>
</comment>
<comment type="interaction">
    <interactant intactId="EBI-995373">
        <id>Q7Z434</id>
    </interactant>
    <interactant intactId="EBI-1047585">
        <id>O75746</id>
        <label>SLC25A12</label>
    </interactant>
    <organismsDiffer>false</organismsDiffer>
    <experiments>3</experiments>
</comment>
<comment type="interaction">
    <interactant intactId="EBI-995373">
        <id>Q7Z434</id>
    </interactant>
    <interactant intactId="EBI-1057697">
        <id>P42224</id>
        <label>STAT1</label>
    </interactant>
    <organismsDiffer>false</organismsDiffer>
    <experiments>3</experiments>
</comment>
<comment type="interaction">
    <interactant intactId="EBI-995373">
        <id>Q7Z434</id>
    </interactant>
    <interactant intactId="EBI-2800345">
        <id>Q86WV6</id>
        <label>STING1</label>
    </interactant>
    <organismsDiffer>false</organismsDiffer>
    <experiments>9</experiments>
</comment>
<comment type="interaction">
    <interactant intactId="EBI-995373">
        <id>Q7Z434</id>
    </interactant>
    <interactant intactId="EBI-356402">
        <id>Q9UHD2</id>
        <label>TBK1</label>
    </interactant>
    <organismsDiffer>false</organismsDiffer>
    <experiments>6</experiments>
</comment>
<comment type="interaction">
    <interactant intactId="EBI-995373">
        <id>Q7Z434</id>
    </interactant>
    <interactant intactId="EBI-296151">
        <id>P37173</id>
        <label>TGFBR2</label>
    </interactant>
    <organismsDiffer>false</organismsDiffer>
    <experiments>3</experiments>
</comment>
<comment type="interaction">
    <interactant intactId="EBI-995373">
        <id>Q7Z434</id>
    </interactant>
    <interactant intactId="EBI-355744">
        <id>Q12933</id>
        <label>TRAF2</label>
    </interactant>
    <organismsDiffer>false</organismsDiffer>
    <experiments>5</experiments>
</comment>
<comment type="interaction">
    <interactant intactId="EBI-995373">
        <id>Q7Z434</id>
    </interactant>
    <interactant intactId="EBI-359276">
        <id>Q9Y4K3</id>
        <label>TRAF6</label>
    </interactant>
    <organismsDiffer>false</organismsDiffer>
    <experiments>4</experiments>
</comment>
<comment type="interaction">
    <interactant intactId="EBI-995373">
        <id>Q7Z434</id>
    </interactant>
    <interactant intactId="EBI-1048119">
        <id>Q14139</id>
        <label>UBE4A</label>
    </interactant>
    <organismsDiffer>false</organismsDiffer>
    <experiments>2</experiments>
</comment>
<comment type="interaction">
    <interactant intactId="EBI-995373">
        <id>Q7Z434</id>
    </interactant>
    <interactant intactId="EBI-25475914">
        <id>P0DTD8</id>
        <label>7b</label>
    </interactant>
    <organismsDiffer>true</organismsDiffer>
    <experiments>3</experiments>
</comment>
<comment type="interaction">
    <interactant intactId="EBI-995373">
        <id>Q7Z434</id>
    </interactant>
    <interactant intactId="EBI-25492846">
        <id>Q7TFA1</id>
        <label>7b</label>
    </interactant>
    <organismsDiffer>true</organismsDiffer>
    <experiments>2</experiments>
</comment>
<comment type="interaction">
    <interactant intactId="EBI-995373">
        <id>Q7Z434</id>
    </interactant>
    <interactant intactId="EBI-9021274">
        <id>P59636</id>
        <label>9b</label>
    </interactant>
    <organismsDiffer>true</organismsDiffer>
    <experiments>5</experiments>
</comment>
<comment type="interaction">
    <interactant intactId="EBI-995373">
        <id>Q7Z434</id>
    </interactant>
    <interactant intactId="EBI-25475853">
        <id>P0DTC5</id>
        <label>M</label>
    </interactant>
    <organismsDiffer>true</organismsDiffer>
    <experiments>11</experiments>
</comment>
<comment type="interaction">
    <interactant intactId="EBI-995373">
        <id>Q7Z434</id>
    </interactant>
    <interactant intactId="EBI-6863628">
        <id>Q6WB96</id>
        <label>M2</label>
    </interactant>
    <organismsDiffer>true</organismsDiffer>
    <experiments>4</experiments>
</comment>
<comment type="interaction">
    <interactant intactId="EBI-995373">
        <id>Q7Z434</id>
    </interactant>
    <interactant intactId="EBI-25475864">
        <id>PRO_0000449623</id>
        <label>rep</label>
        <dbReference type="UniProtKB" id="P0DTD1"/>
    </interactant>
    <organismsDiffer>true</organismsDiffer>
    <experiments>2</experiments>
</comment>
<comment type="interaction">
    <interactant intactId="EBI-995373">
        <id>Q7Z434</id>
    </interactant>
    <interactant intactId="EBI-3650820">
        <id>Q69027</id>
        <label>X</label>
    </interactant>
    <organismsDiffer>true</organismsDiffer>
    <experiments>2</experiments>
</comment>
<comment type="interaction">
    <interactant intactId="EBI-995373">
        <id>Q7Z434</id>
    </interactant>
    <interactant intactId="EBI-9522123">
        <id>A2T3M4</id>
    </interactant>
    <organismsDiffer>true</organismsDiffer>
    <experiments>4</experiments>
</comment>
<comment type="interaction">
    <interactant intactId="EBI-15577799">
        <id>Q7Z434-1</id>
    </interactant>
    <interactant intactId="EBI-1047414">
        <id>Q9H1Y0</id>
        <label>ATG5</label>
    </interactant>
    <organismsDiffer>false</organismsDiffer>
    <experiments>4</experiments>
</comment>
<comment type="interaction">
    <interactant intactId="EBI-15577799">
        <id>Q7Z434-1</id>
    </interactant>
    <interactant intactId="EBI-6115771">
        <id>Q9BYX4</id>
        <label>IFIH1</label>
    </interactant>
    <organismsDiffer>false</organismsDiffer>
    <experiments>3</experiments>
</comment>
<comment type="interaction">
    <interactant intactId="EBI-15577799">
        <id>Q7Z434-1</id>
    </interactant>
    <interactant intactId="EBI-15680006">
        <id>Q86UT6-1</id>
        <label>NLRX1</label>
    </interactant>
    <organismsDiffer>false</organismsDiffer>
    <experiments>3</experiments>
</comment>
<comment type="interaction">
    <interactant intactId="EBI-15577799">
        <id>Q7Z434-1</id>
    </interactant>
    <interactant intactId="EBI-15577823">
        <id>O95786-1</id>
        <label>RIGI</label>
    </interactant>
    <organismsDiffer>false</organismsDiffer>
    <experiments>8</experiments>
</comment>
<comment type="interaction">
    <interactant intactId="EBI-15577799">
        <id>Q7Z434-1</id>
    </interactant>
    <interactant intactId="EBI-2339208">
        <id>Q96EQ8</id>
        <label>RNF125</label>
    </interactant>
    <organismsDiffer>false</organismsDiffer>
    <experiments>2</experiments>
</comment>
<comment type="interaction">
    <interactant intactId="EBI-15577799">
        <id>Q7Z434-1</id>
    </interactant>
    <interactant intactId="EBI-2800345">
        <id>Q86WV6</id>
        <label>STING1</label>
    </interactant>
    <organismsDiffer>false</organismsDiffer>
    <experiments>7</experiments>
</comment>
<comment type="interaction">
    <interactant intactId="EBI-15577799">
        <id>Q7Z434-1</id>
    </interactant>
    <interactant intactId="EBI-540834">
        <id>P61964</id>
        <label>WDR5</label>
    </interactant>
    <organismsDiffer>false</organismsDiffer>
    <experiments>3</experiments>
</comment>
<comment type="interaction">
    <interactant intactId="EBI-15577799">
        <id>Q7Z434-1</id>
    </interactant>
    <interactant intactId="EBI-16182226">
        <id>Q91WS2-1</id>
        <label>Nlrp6</label>
    </interactant>
    <organismsDiffer>true</organismsDiffer>
    <experiments>2</experiments>
</comment>
<comment type="subcellular location">
    <subcellularLocation>
        <location evidence="8">Mitochondrion outer membrane</location>
        <topology evidence="73">Single-pass membrane protein</topology>
    </subcellularLocation>
    <subcellularLocation>
        <location evidence="5 18 27 29 30 37 42 47 64">Mitochondrion</location>
    </subcellularLocation>
    <subcellularLocation>
        <location evidence="28">Peroxisome</location>
    </subcellularLocation>
</comment>
<comment type="alternative products">
    <event type="alternative splicing"/>
    <isoform>
        <id>Q7Z434-1</id>
        <name>1</name>
        <sequence type="displayed"/>
    </isoform>
    <isoform>
        <id>Q7Z434-2</id>
        <name>2</name>
        <sequence type="described" ref="VSP_010262 VSP_010263"/>
    </isoform>
    <isoform>
        <id>Q7Z434-3</id>
        <name>3</name>
        <sequence type="described" ref="VSP_010261 VSP_010264"/>
    </isoform>
    <isoform>
        <id>Q7Z434-4</id>
        <name>4</name>
        <sequence type="described" ref="VSP_045872"/>
    </isoform>
    <isoform>
        <id>Q7Z434-5</id>
        <name>5</name>
        <name>MAVS1b</name>
        <name>exon 3 deletion</name>
        <sequence type="described" ref="VSP_047817 VSP_047818"/>
    </isoform>
    <isoform>
        <id>Q7Z434-6</id>
        <name>6</name>
        <name>MAVS1a</name>
        <name>exon 2 deletion</name>
        <sequence type="described" ref="VSP_047816 VSP_010263"/>
    </isoform>
</comment>
<comment type="tissue specificity">
    <text evidence="8 9 10">Present in T-cells, monocytes, epithelial cells and hepatocytes (at protein level). Ubiquitously expressed, with highest levels in heart, skeletal muscle, liver, placenta and peripheral blood leukocytes.</text>
</comment>
<comment type="domain">
    <text evidence="44">The pLxIS motif constitutes an IRF3-binding motif: following phosphorylation by TBK1, the phosphorylated pLxIS motif of MAVS recruits IRF3 (PubMed:25636800). IRF3 is then phosphorylated and activated by TBK1 to induce type-I interferons and other cytokines (PubMed:25636800).</text>
</comment>
<comment type="domain">
    <text evidence="8">Both CARD and transmembrane domains are essential for antiviral function. The CARD domain is responsible for interaction with RIGI and IFIH1/MDA5.</text>
</comment>
<comment type="domain">
    <text evidence="13">The transmembrane domain and residues 300-444 are essential for its interaction with DHX58/LGP2.</text>
</comment>
<comment type="PTM">
    <text evidence="44 46">Following activation, phosphorylated by TBK1 at Ser-442 in the pLxIS motif (PubMed:25636800, PubMed:27302953). The phosphorylated pLxIS motif constitutes an IRF3-binding motif, leading to recruitment of the transcription factor IRF3 to induce type-I interferons and other cytokines (PubMed:25636800).</text>
</comment>
<comment type="PTM">
    <text evidence="16 26 34 44 45 49 54 60 62 63 66 68">Ubiquitinated (PubMed:19881509, PubMed:23087404, PubMed:25636800, PubMed:38016475). Undergoes 'Lys-48'-linked polyubiquitination catalyzed by ITCH; ITCH-dependent polyubiquitination is mediated by the interaction with PCBP2 and leads to MAVS/IPS1 proteasomal degradation (PubMed:19881509). Ubiquitinated by RNF125, leading to its degradation by the proteasome (PubMed:17460044). Undergoes 'Lys-48'-linked ubiquitination catalyzed by SMURF1 (PubMed:23087404). Undergoes 'Lys-48'-linked ubiquitination catalyzed by MARCHF5 at Lys-7 and Lys-500, leading to proteasomal degradation (PubMed:26246171). Ubiquitinated via 'Lys-63'-linked ubiquitination at Lys-10, Lys-311 and Lys-461 by UBE2N and TRIM31, promoting MAVS polymerization and formation of three-stranded helical filaments on mitochondria (PubMed:27992402, PubMed:37582970). Undergoes 'Lys-63'-linked ubiquitination leading to enhanced interaction between MAVS and TRAF2 (PubMed:34880843). Undergoes 'Lys-27'-linked ubiquitination by TRIM21 leading to enhanced interaction between MAVS and TBK1 (PubMed:29743353, PubMed:36943869). Deubiquitinated by USP10 leading to attenuation of RIGI-mediated MAVS aggregation and production of type I interferon (PubMed:37582970). Undergoes 'Lys-48'-linked polyubiquitination catalyzed by RNF115 leading to its degradation (PubMed:33139700).</text>
</comment>
<comment type="PTM">
    <text evidence="68">Palmitoylated by ZHDDC4. Palmitoylation promotes MAVS stabilization and activation by inhibiting 'Lys-48'- but facilitating 'Lys-63'-linked ubiquitination.</text>
</comment>
<comment type="PTM">
    <text evidence="55">Proteolytically cleaved by apoptotic caspases during apoptosis, leading to its inactivation (PubMed:30878284). Cleavage by CASP3 during virus-induced apoptosis inactivates it, preventing cytokine overproduction (PubMed:30878284).</text>
</comment>
<comment type="PTM">
    <text evidence="15">(Microbial infection) Cleaved and degraded by hepatitis A virus (HAV) protein 3ABC allowing the virus to disrupt the activation of host IRF3 through the MDA5 pathway.</text>
</comment>
<comment type="PTM">
    <text evidence="39 51">(Microbial infection) Cleaved by the protease 2A of coxsackievirus B3, poliovirus and enterovirus 71 allowing the virus to disrupt the host type I interferon production.</text>
</comment>
<comment type="PTM">
    <text evidence="53">(Microbial infection) Cleaved by Seneca Valley virus protease 3C allowing the virus to suppress interferon type-I production.</text>
</comment>
<comment type="PTM">
    <text evidence="11 12">(Microbial infection) Cleaved by HCV protease NS3/4A, thereby preventing the establishment of an antiviral state.</text>
</comment>
<comment type="PTM">
    <text evidence="64">(Microbial infection) UFMylated by ULF1 in association with Epstein-Barr virus BILF1; leading to MAVS routing to the lysosome.</text>
</comment>
<comment type="miscellaneous">
    <molecule>Isoform 5</molecule>
    <text evidence="73">Selectively activates an IFNbeta but not an IL8 promoter. Interacts with RIP1 and FADD and exhibits anti-viral activity against VSV infection.</text>
</comment>
<comment type="sequence caution" evidence="73">
    <conflict type="erroneous initiation">
        <sequence resource="EMBL-CDS" id="BAA86585"/>
    </conflict>
    <text>Extended N-terminus.</text>
</comment>
<comment type="sequence caution" evidence="73">
    <conflict type="frameshift">
        <sequence resource="EMBL-CDS" id="BAB14684"/>
    </conflict>
</comment>
<keyword id="KW-0002">3D-structure</keyword>
<keyword id="KW-0007">Acetylation</keyword>
<keyword id="KW-0025">Alternative splicing</keyword>
<keyword id="KW-0051">Antiviral defense</keyword>
<keyword id="KW-0945">Host-virus interaction</keyword>
<keyword id="KW-0391">Immunity</keyword>
<keyword id="KW-0399">Innate immunity</keyword>
<keyword id="KW-1017">Isopeptide bond</keyword>
<keyword id="KW-0449">Lipoprotein</keyword>
<keyword id="KW-0472">Membrane</keyword>
<keyword id="KW-0488">Methylation</keyword>
<keyword id="KW-0496">Mitochondrion</keyword>
<keyword id="KW-1000">Mitochondrion outer membrane</keyword>
<keyword id="KW-0564">Palmitate</keyword>
<keyword id="KW-0576">Peroxisome</keyword>
<keyword id="KW-0597">Phosphoprotein</keyword>
<keyword id="KW-1267">Proteomics identification</keyword>
<keyword id="KW-1185">Reference proteome</keyword>
<keyword id="KW-0812">Transmembrane</keyword>
<keyword id="KW-1133">Transmembrane helix</keyword>
<keyword id="KW-0832">Ubl conjugation</keyword>
<proteinExistence type="evidence at protein level"/>
<sequence length="540" mass="56528">MPFAEDKTYKYICRNFSNFCNVDVVEILPYLPCLTARDQDRLRATCTLSGNRDTLWHLFNTLQRRPGWVEYFIAALRGCELVDLADEVASVYQSYQPRTSDRPPDPLEPPSLPAERPGPPTPAAAHSIPYNSCREKEPSYPMPVQETQAPESPGENSEQALQTLSPRAIPRNPDGGPLESSSDLAALSPLTSSGHQEQDTELGSTHTAGATSSLTPSRGPVSPSVSFQPLARSTPRASRLPGPTGSVVSTGTSFSSSSPGLASAGAAEGKQGAESDQAEPIICSSGAEAPANSLPSKVPTTLMPVNTVALKVPANPASVSTVPSKLPTSSKPPGAVPSNALTNPAPSKLPINSTRAGMVPSKVPTSMVLTKVSASTVPTDGSSRNEETPAAPTPAGATGGSSAWLDSSSENRGLGSELSKPGVLASQVDSPFSGCFEDLAISASTSLGMGPCHGPEENEYKSEGTFGIHVAENPSIQLLEGNPGPPADPDGGPRPQADRKFQEREVPCHRPSPGALWLQVAVTGVLVVTLLVVLYRRRLH</sequence>
<dbReference type="EMBL" id="DQ174270">
    <property type="protein sequence ID" value="AAZ80417.1"/>
    <property type="molecule type" value="mRNA"/>
</dbReference>
<dbReference type="EMBL" id="DQ167126">
    <property type="protein sequence ID" value="ABA54890.1"/>
    <property type="molecule type" value="mRNA"/>
</dbReference>
<dbReference type="EMBL" id="DQ181928">
    <property type="protein sequence ID" value="ABA19229.1"/>
    <property type="molecule type" value="mRNA"/>
</dbReference>
<dbReference type="EMBL" id="AB232371">
    <property type="protein sequence ID" value="BAE79738.1"/>
    <property type="molecule type" value="mRNA"/>
</dbReference>
<dbReference type="EMBL" id="EF467323">
    <property type="protein sequence ID" value="ABR24161.1"/>
    <property type="molecule type" value="mRNA"/>
</dbReference>
<dbReference type="EMBL" id="EF467324">
    <property type="protein sequence ID" value="ABR24162.1"/>
    <property type="molecule type" value="mRNA"/>
</dbReference>
<dbReference type="EMBL" id="KC415005">
    <property type="protein sequence ID" value="AGF94754.1"/>
    <property type="molecule type" value="mRNA"/>
</dbReference>
<dbReference type="EMBL" id="AB033097">
    <property type="protein sequence ID" value="BAA86585.1"/>
    <property type="status" value="ALT_INIT"/>
    <property type="molecule type" value="mRNA"/>
</dbReference>
<dbReference type="EMBL" id="AB097003">
    <property type="protein sequence ID" value="BAC77356.1"/>
    <property type="molecule type" value="mRNA"/>
</dbReference>
<dbReference type="EMBL" id="AK023799">
    <property type="protein sequence ID" value="BAB14684.1"/>
    <property type="status" value="ALT_FRAME"/>
    <property type="molecule type" value="mRNA"/>
</dbReference>
<dbReference type="EMBL" id="AK123956">
    <property type="protein sequence ID" value="BAC85734.1"/>
    <property type="molecule type" value="mRNA"/>
</dbReference>
<dbReference type="EMBL" id="AK130992">
    <property type="protein sequence ID" value="BAC85473.1"/>
    <property type="molecule type" value="mRNA"/>
</dbReference>
<dbReference type="EMBL" id="AK291785">
    <property type="protein sequence ID" value="BAF84474.1"/>
    <property type="molecule type" value="mRNA"/>
</dbReference>
<dbReference type="EMBL" id="AK296897">
    <property type="protein sequence ID" value="BAG59455.1"/>
    <property type="molecule type" value="mRNA"/>
</dbReference>
<dbReference type="EMBL" id="AL109804">
    <property type="status" value="NOT_ANNOTATED_CDS"/>
    <property type="molecule type" value="Genomic_DNA"/>
</dbReference>
<dbReference type="EMBL" id="AL353194">
    <property type="status" value="NOT_ANNOTATED_CDS"/>
    <property type="molecule type" value="Genomic_DNA"/>
</dbReference>
<dbReference type="EMBL" id="CH471133">
    <property type="protein sequence ID" value="EAX10481.1"/>
    <property type="molecule type" value="Genomic_DNA"/>
</dbReference>
<dbReference type="EMBL" id="BC044952">
    <property type="protein sequence ID" value="AAH44952.1"/>
    <property type="molecule type" value="mRNA"/>
</dbReference>
<dbReference type="CCDS" id="CCDS33437.1">
    <molecule id="Q7Z434-1"/>
</dbReference>
<dbReference type="CCDS" id="CCDS56176.1">
    <molecule id="Q7Z434-4"/>
</dbReference>
<dbReference type="RefSeq" id="NP_001193420.1">
    <molecule id="Q7Z434-4"/>
    <property type="nucleotide sequence ID" value="NM_001206491.2"/>
</dbReference>
<dbReference type="RefSeq" id="NP_001372592.1">
    <molecule id="Q7Z434-4"/>
    <property type="nucleotide sequence ID" value="NM_001385663.1"/>
</dbReference>
<dbReference type="RefSeq" id="NP_065797.2">
    <molecule id="Q7Z434-1"/>
    <property type="nucleotide sequence ID" value="NM_020746.5"/>
</dbReference>
<dbReference type="PDB" id="2MS7">
    <property type="method" value="NMR"/>
    <property type="chains" value="A/B/C/D/E/F/G/H/I/J/K/L/M/N/O/P/Q/R/S/T/U=1-100"/>
</dbReference>
<dbReference type="PDB" id="2MS8">
    <property type="method" value="NMR"/>
    <property type="chains" value="A=1-100"/>
</dbReference>
<dbReference type="PDB" id="2VGQ">
    <property type="method" value="X-ray"/>
    <property type="resolution" value="2.10 A"/>
    <property type="chains" value="A=1-93"/>
</dbReference>
<dbReference type="PDB" id="3J6C">
    <property type="method" value="EM"/>
    <property type="resolution" value="9.60 A"/>
    <property type="chains" value="A=3-93"/>
</dbReference>
<dbReference type="PDB" id="3J6J">
    <property type="method" value="EM"/>
    <property type="resolution" value="3.64 A"/>
    <property type="chains" value="A/B/C/D/E/G/I/L=1-97"/>
</dbReference>
<dbReference type="PDB" id="3RC5">
    <property type="method" value="X-ray"/>
    <property type="resolution" value="1.60 A"/>
    <property type="chains" value="B=502-508"/>
</dbReference>
<dbReference type="PDB" id="4P4H">
    <property type="method" value="X-ray"/>
    <property type="resolution" value="3.40 A"/>
    <property type="chains" value="I/J/K/L/M/N/O/P=1-99"/>
</dbReference>
<dbReference type="PDB" id="4Z8M">
    <property type="method" value="X-ray"/>
    <property type="resolution" value="2.95 A"/>
    <property type="chains" value="C/D=450-468"/>
</dbReference>
<dbReference type="PDB" id="5JEK">
    <property type="method" value="X-ray"/>
    <property type="resolution" value="2.40 A"/>
    <property type="chains" value="C/D=433-448"/>
</dbReference>
<dbReference type="PDB" id="7DNI">
    <property type="method" value="EM"/>
    <property type="resolution" value="3.20 A"/>
    <property type="chains" value="M/N/O/P=1-97"/>
</dbReference>
<dbReference type="PDB" id="8WKW">
    <property type="method" value="EM"/>
    <property type="resolution" value="3.21 A"/>
    <property type="chains" value="A/B/C/D/E/F/G/H/I/J/K/L/M/N/O/P/Q/R/S/T/U/V/W/X/Y/Z=1-97"/>
</dbReference>
<dbReference type="PDBsum" id="2MS7"/>
<dbReference type="PDBsum" id="2MS8"/>
<dbReference type="PDBsum" id="2VGQ"/>
<dbReference type="PDBsum" id="3J6C"/>
<dbReference type="PDBsum" id="3J6J"/>
<dbReference type="PDBsum" id="3RC5"/>
<dbReference type="PDBsum" id="4P4H"/>
<dbReference type="PDBsum" id="4Z8M"/>
<dbReference type="PDBsum" id="5JEK"/>
<dbReference type="PDBsum" id="7DNI"/>
<dbReference type="PDBsum" id="8WKW"/>
<dbReference type="BMRB" id="Q7Z434"/>
<dbReference type="EMDB" id="EMD-30784"/>
<dbReference type="EMDB" id="EMD-37609"/>
<dbReference type="EMDB" id="EMD-5890"/>
<dbReference type="EMDB" id="EMD-5891"/>
<dbReference type="EMDB" id="EMD-5922"/>
<dbReference type="EMDB" id="EMD-5925"/>
<dbReference type="EMDB" id="EMD-6428"/>
<dbReference type="SMR" id="Q7Z434"/>
<dbReference type="BioGRID" id="121570">
    <property type="interactions" value="320"/>
</dbReference>
<dbReference type="ComplexPortal" id="CPX-6037">
    <property type="entry name" value="MAVS-TRAF3 E3 ubiquitin ligase complex"/>
</dbReference>
<dbReference type="CORUM" id="Q7Z434"/>
<dbReference type="DIP" id="DIP-35445N"/>
<dbReference type="FunCoup" id="Q7Z434">
    <property type="interactions" value="996"/>
</dbReference>
<dbReference type="IntAct" id="Q7Z434">
    <property type="interactions" value="130"/>
</dbReference>
<dbReference type="MINT" id="Q7Z434"/>
<dbReference type="STRING" id="9606.ENSP00000401980"/>
<dbReference type="ChEMBL" id="CHEMBL4523363"/>
<dbReference type="GlyCosmos" id="Q7Z434">
    <property type="glycosylation" value="6 sites, 2 glycans"/>
</dbReference>
<dbReference type="GlyGen" id="Q7Z434">
    <property type="glycosylation" value="29 sites, 1 N-linked glycan (1 site), 2 O-linked glycans (26 sites)"/>
</dbReference>
<dbReference type="iPTMnet" id="Q7Z434"/>
<dbReference type="MetOSite" id="Q7Z434"/>
<dbReference type="PhosphoSitePlus" id="Q7Z434"/>
<dbReference type="SwissPalm" id="Q7Z434"/>
<dbReference type="BioMuta" id="MAVS"/>
<dbReference type="DMDM" id="47115748"/>
<dbReference type="CPTAC" id="CPTAC-977"/>
<dbReference type="jPOST" id="Q7Z434"/>
<dbReference type="MassIVE" id="Q7Z434"/>
<dbReference type="PaxDb" id="9606-ENSP00000401980"/>
<dbReference type="PeptideAtlas" id="Q7Z434"/>
<dbReference type="ProteomicsDB" id="27148"/>
<dbReference type="ProteomicsDB" id="3402"/>
<dbReference type="ProteomicsDB" id="69137">
    <molecule id="Q7Z434-1"/>
</dbReference>
<dbReference type="ProteomicsDB" id="69138">
    <molecule id="Q7Z434-2"/>
</dbReference>
<dbReference type="ProteomicsDB" id="69139">
    <molecule id="Q7Z434-3"/>
</dbReference>
<dbReference type="Pumba" id="Q7Z434"/>
<dbReference type="Antibodypedia" id="3363">
    <property type="antibodies" value="683 antibodies from 43 providers"/>
</dbReference>
<dbReference type="DNASU" id="57506"/>
<dbReference type="Ensembl" id="ENST00000416600.6">
    <molecule id="Q7Z434-4"/>
    <property type="protein sequence ID" value="ENSP00000413749.2"/>
    <property type="gene ID" value="ENSG00000088888.18"/>
</dbReference>
<dbReference type="Ensembl" id="ENST00000428216.4">
    <molecule id="Q7Z434-1"/>
    <property type="protein sequence ID" value="ENSP00000401980.2"/>
    <property type="gene ID" value="ENSG00000088888.18"/>
</dbReference>
<dbReference type="GeneID" id="57506"/>
<dbReference type="KEGG" id="hsa:57506"/>
<dbReference type="MANE-Select" id="ENST00000428216.4">
    <property type="protein sequence ID" value="ENSP00000401980.2"/>
    <property type="RefSeq nucleotide sequence ID" value="NM_020746.5"/>
    <property type="RefSeq protein sequence ID" value="NP_065797.2"/>
</dbReference>
<dbReference type="UCSC" id="uc002wjw.5">
    <molecule id="Q7Z434-1"/>
    <property type="organism name" value="human"/>
</dbReference>
<dbReference type="AGR" id="HGNC:29233"/>
<dbReference type="CTD" id="57506"/>
<dbReference type="DisGeNET" id="57506"/>
<dbReference type="GeneCards" id="MAVS"/>
<dbReference type="HGNC" id="HGNC:29233">
    <property type="gene designation" value="MAVS"/>
</dbReference>
<dbReference type="HPA" id="ENSG00000088888">
    <property type="expression patterns" value="Low tissue specificity"/>
</dbReference>
<dbReference type="MIM" id="609676">
    <property type="type" value="gene"/>
</dbReference>
<dbReference type="neXtProt" id="NX_Q7Z434"/>
<dbReference type="OpenTargets" id="ENSG00000088888"/>
<dbReference type="PharmGKB" id="PA164722208"/>
<dbReference type="VEuPathDB" id="HostDB:ENSG00000088888"/>
<dbReference type="eggNOG" id="ENOG502SAUA">
    <property type="taxonomic scope" value="Eukaryota"/>
</dbReference>
<dbReference type="GeneTree" id="ENSGT00510000049120"/>
<dbReference type="HOGENOM" id="CLU_042052_0_0_1"/>
<dbReference type="InParanoid" id="Q7Z434"/>
<dbReference type="OMA" id="PHIDQKF"/>
<dbReference type="OrthoDB" id="9909785at2759"/>
<dbReference type="PAN-GO" id="Q7Z434">
    <property type="GO annotations" value="0 GO annotations based on evolutionary models"/>
</dbReference>
<dbReference type="PhylomeDB" id="Q7Z434"/>
<dbReference type="TreeFam" id="TF333444"/>
<dbReference type="PathwayCommons" id="Q7Z434"/>
<dbReference type="Reactome" id="R-HSA-168928">
    <property type="pathway name" value="DDX58/IFIH1-mediated induction of interferon-alpha/beta"/>
</dbReference>
<dbReference type="Reactome" id="R-HSA-5689896">
    <property type="pathway name" value="Ovarian tumor domain proteases"/>
</dbReference>
<dbReference type="Reactome" id="R-HSA-918233">
    <property type="pathway name" value="TRAF3-dependent IRF activation pathway"/>
</dbReference>
<dbReference type="Reactome" id="R-HSA-933541">
    <property type="pathway name" value="TRAF6 mediated IRF7 activation"/>
</dbReference>
<dbReference type="Reactome" id="R-HSA-933542">
    <property type="pathway name" value="TRAF6 mediated NF-kB activation"/>
</dbReference>
<dbReference type="Reactome" id="R-HSA-933543">
    <property type="pathway name" value="NF-kB activation through FADD/RIP-1 pathway mediated by caspase-8 and -10"/>
</dbReference>
<dbReference type="Reactome" id="R-HSA-936440">
    <property type="pathway name" value="Negative regulators of DDX58/IFIH1 signaling"/>
</dbReference>
<dbReference type="Reactome" id="R-HSA-9692916">
    <property type="pathway name" value="SARS-CoV-1 activates/modulates innate immune responses"/>
</dbReference>
<dbReference type="Reactome" id="R-HSA-9705671">
    <property type="pathway name" value="SARS-CoV-2 activates/modulates innate and adaptive immune responses"/>
</dbReference>
<dbReference type="Reactome" id="R-HSA-9833109">
    <property type="pathway name" value="Evasion by RSV of host interferon responses"/>
</dbReference>
<dbReference type="Reactome" id="R-HSA-9833482">
    <property type="pathway name" value="PKR-mediated signaling"/>
</dbReference>
<dbReference type="SignaLink" id="Q7Z434"/>
<dbReference type="SIGNOR" id="Q7Z434"/>
<dbReference type="BioGRID-ORCS" id="57506">
    <property type="hits" value="21 hits in 1167 CRISPR screens"/>
</dbReference>
<dbReference type="ChiTaRS" id="MAVS">
    <property type="organism name" value="human"/>
</dbReference>
<dbReference type="EvolutionaryTrace" id="Q7Z434"/>
<dbReference type="GeneWiki" id="VISA_(gene)"/>
<dbReference type="GenomeRNAi" id="57506"/>
<dbReference type="Pharos" id="Q7Z434">
    <property type="development level" value="Tbio"/>
</dbReference>
<dbReference type="PRO" id="PR:Q7Z434"/>
<dbReference type="Proteomes" id="UP000005640">
    <property type="component" value="Chromosome 20"/>
</dbReference>
<dbReference type="RNAct" id="Q7Z434">
    <property type="molecule type" value="protein"/>
</dbReference>
<dbReference type="Bgee" id="ENSG00000088888">
    <property type="expression patterns" value="Expressed in skeletal muscle tissue of rectus abdominis and 200 other cell types or tissues"/>
</dbReference>
<dbReference type="GO" id="GO:0031966">
    <property type="term" value="C:mitochondrial membrane"/>
    <property type="evidence" value="ECO:0000314"/>
    <property type="project" value="UniProt"/>
</dbReference>
<dbReference type="GO" id="GO:0005741">
    <property type="term" value="C:mitochondrial outer membrane"/>
    <property type="evidence" value="ECO:0000314"/>
    <property type="project" value="BHF-UCL"/>
</dbReference>
<dbReference type="GO" id="GO:0005739">
    <property type="term" value="C:mitochondrion"/>
    <property type="evidence" value="ECO:0000314"/>
    <property type="project" value="HPA"/>
</dbReference>
<dbReference type="GO" id="GO:0005778">
    <property type="term" value="C:peroxisomal membrane"/>
    <property type="evidence" value="ECO:0000314"/>
    <property type="project" value="UniProtKB"/>
</dbReference>
<dbReference type="GO" id="GO:0000151">
    <property type="term" value="C:ubiquitin ligase complex"/>
    <property type="evidence" value="ECO:0000303"/>
    <property type="project" value="ComplexPortal"/>
</dbReference>
<dbReference type="GO" id="GO:0050700">
    <property type="term" value="F:CARD domain binding"/>
    <property type="evidence" value="ECO:0000353"/>
    <property type="project" value="BHF-UCL"/>
</dbReference>
<dbReference type="GO" id="GO:0140297">
    <property type="term" value="F:DNA-binding transcription factor binding"/>
    <property type="evidence" value="ECO:0000353"/>
    <property type="project" value="BHF-UCL"/>
</dbReference>
<dbReference type="GO" id="GO:0042802">
    <property type="term" value="F:identical protein binding"/>
    <property type="evidence" value="ECO:0000314"/>
    <property type="project" value="UniProt"/>
</dbReference>
<dbReference type="GO" id="GO:0060090">
    <property type="term" value="F:molecular adaptor activity"/>
    <property type="evidence" value="ECO:0000314"/>
    <property type="project" value="UniProt"/>
</dbReference>
<dbReference type="GO" id="GO:0140693">
    <property type="term" value="F:molecular condensate scaffold activity"/>
    <property type="evidence" value="ECO:0000314"/>
    <property type="project" value="UniProtKB"/>
</dbReference>
<dbReference type="GO" id="GO:0019901">
    <property type="term" value="F:protein kinase binding"/>
    <property type="evidence" value="ECO:0000353"/>
    <property type="project" value="BHF-UCL"/>
</dbReference>
<dbReference type="GO" id="GO:0120283">
    <property type="term" value="F:protein serine/threonine kinase binding"/>
    <property type="evidence" value="ECO:0000353"/>
    <property type="project" value="BHF-UCL"/>
</dbReference>
<dbReference type="GO" id="GO:0030674">
    <property type="term" value="F:protein-macromolecule adaptor activity"/>
    <property type="evidence" value="ECO:0000314"/>
    <property type="project" value="UniProt"/>
</dbReference>
<dbReference type="GO" id="GO:0035591">
    <property type="term" value="F:signaling adaptor activity"/>
    <property type="evidence" value="ECO:0000314"/>
    <property type="project" value="UniProtKB"/>
</dbReference>
<dbReference type="GO" id="GO:0002218">
    <property type="term" value="P:activation of innate immune response"/>
    <property type="evidence" value="ECO:0000314"/>
    <property type="project" value="UniProtKB"/>
</dbReference>
<dbReference type="GO" id="GO:0140374">
    <property type="term" value="P:antiviral innate immune response"/>
    <property type="evidence" value="ECO:0000314"/>
    <property type="project" value="UniProtKB"/>
</dbReference>
<dbReference type="GO" id="GO:0071360">
    <property type="term" value="P:cellular response to exogenous dsRNA"/>
    <property type="evidence" value="ECO:0000315"/>
    <property type="project" value="UniProtKB"/>
</dbReference>
<dbReference type="GO" id="GO:0002753">
    <property type="term" value="P:cytoplasmic pattern recognition receptor signaling pathway"/>
    <property type="evidence" value="ECO:0000314"/>
    <property type="project" value="UniProt"/>
</dbReference>
<dbReference type="GO" id="GO:0042742">
    <property type="term" value="P:defense response to bacterium"/>
    <property type="evidence" value="ECO:0000315"/>
    <property type="project" value="UniProtKB"/>
</dbReference>
<dbReference type="GO" id="GO:0051607">
    <property type="term" value="P:defense response to virus"/>
    <property type="evidence" value="ECO:0000314"/>
    <property type="project" value="UniProtKB"/>
</dbReference>
<dbReference type="GO" id="GO:0045087">
    <property type="term" value="P:innate immune response"/>
    <property type="evidence" value="ECO:0000314"/>
    <property type="project" value="UniProt"/>
</dbReference>
<dbReference type="GO" id="GO:0035556">
    <property type="term" value="P:intracellular signal transduction"/>
    <property type="evidence" value="ECO:0000314"/>
    <property type="project" value="BHF-UCL"/>
</dbReference>
<dbReference type="GO" id="GO:0045071">
    <property type="term" value="P:negative regulation of viral genome replication"/>
    <property type="evidence" value="ECO:0000314"/>
    <property type="project" value="UniProtKB"/>
</dbReference>
<dbReference type="GO" id="GO:0043123">
    <property type="term" value="P:positive regulation of canonical NF-kappaB signal transduction"/>
    <property type="evidence" value="ECO:0000314"/>
    <property type="project" value="BHF-UCL"/>
</dbReference>
<dbReference type="GO" id="GO:0071651">
    <property type="term" value="P:positive regulation of chemokine (C-C motif) ligand 5 production"/>
    <property type="evidence" value="ECO:0000314"/>
    <property type="project" value="BHF-UCL"/>
</dbReference>
<dbReference type="GO" id="GO:0002230">
    <property type="term" value="P:positive regulation of defense response to virus by host"/>
    <property type="evidence" value="ECO:0000314"/>
    <property type="project" value="UniProtKB"/>
</dbReference>
<dbReference type="GO" id="GO:0032727">
    <property type="term" value="P:positive regulation of interferon-alpha production"/>
    <property type="evidence" value="ECO:0000314"/>
    <property type="project" value="BHF-UCL"/>
</dbReference>
<dbReference type="GO" id="GO:0032728">
    <property type="term" value="P:positive regulation of interferon-beta production"/>
    <property type="evidence" value="ECO:0000314"/>
    <property type="project" value="UniProtKB"/>
</dbReference>
<dbReference type="GO" id="GO:0032755">
    <property type="term" value="P:positive regulation of interleukin-6 production"/>
    <property type="evidence" value="ECO:0000315"/>
    <property type="project" value="UniProtKB"/>
</dbReference>
<dbReference type="GO" id="GO:0032757">
    <property type="term" value="P:positive regulation of interleukin-8 production"/>
    <property type="evidence" value="ECO:0000314"/>
    <property type="project" value="BHF-UCL"/>
</dbReference>
<dbReference type="GO" id="GO:0071660">
    <property type="term" value="P:positive regulation of IP-10 production"/>
    <property type="evidence" value="ECO:0000314"/>
    <property type="project" value="BHF-UCL"/>
</dbReference>
<dbReference type="GO" id="GO:0002735">
    <property type="term" value="P:positive regulation of myeloid dendritic cell cytokine production"/>
    <property type="evidence" value="ECO:0000250"/>
    <property type="project" value="UniProtKB"/>
</dbReference>
<dbReference type="GO" id="GO:1900227">
    <property type="term" value="P:positive regulation of NLRP3 inflammasome complex assembly"/>
    <property type="evidence" value="ECO:0000314"/>
    <property type="project" value="UniProtKB"/>
</dbReference>
<dbReference type="GO" id="GO:0042307">
    <property type="term" value="P:positive regulation of protein import into nucleus"/>
    <property type="evidence" value="ECO:0000314"/>
    <property type="project" value="BHF-UCL"/>
</dbReference>
<dbReference type="GO" id="GO:0060760">
    <property type="term" value="P:positive regulation of response to cytokine stimulus"/>
    <property type="evidence" value="ECO:0000315"/>
    <property type="project" value="UniProtKB"/>
</dbReference>
<dbReference type="GO" id="GO:0045944">
    <property type="term" value="P:positive regulation of transcription by RNA polymerase II"/>
    <property type="evidence" value="ECO:0000314"/>
    <property type="project" value="BHF-UCL"/>
</dbReference>
<dbReference type="GO" id="GO:0032760">
    <property type="term" value="P:positive regulation of tumor necrosis factor production"/>
    <property type="evidence" value="ECO:0000314"/>
    <property type="project" value="BHF-UCL"/>
</dbReference>
<dbReference type="GO" id="GO:0032481">
    <property type="term" value="P:positive regulation of type I interferon production"/>
    <property type="evidence" value="ECO:0000314"/>
    <property type="project" value="UniProt"/>
</dbReference>
<dbReference type="GO" id="GO:0060340">
    <property type="term" value="P:positive regulation of type I interferon-mediated signaling pathway"/>
    <property type="evidence" value="ECO:0000314"/>
    <property type="project" value="UniProtKB"/>
</dbReference>
<dbReference type="GO" id="GO:0070585">
    <property type="term" value="P:protein localization to mitochondrion"/>
    <property type="evidence" value="ECO:0000314"/>
    <property type="project" value="UniProtKB"/>
</dbReference>
<dbReference type="GO" id="GO:1900063">
    <property type="term" value="P:regulation of peroxisome organization"/>
    <property type="evidence" value="ECO:0000315"/>
    <property type="project" value="UniProtKB"/>
</dbReference>
<dbReference type="GO" id="GO:0007165">
    <property type="term" value="P:signal transduction"/>
    <property type="evidence" value="ECO:0000315"/>
    <property type="project" value="UniProtKB"/>
</dbReference>
<dbReference type="GO" id="GO:0060337">
    <property type="term" value="P:type I interferon-mediated signaling pathway"/>
    <property type="evidence" value="ECO:0000303"/>
    <property type="project" value="ComplexPortal"/>
</dbReference>
<dbReference type="CDD" id="cd08811">
    <property type="entry name" value="CARD_IPS1"/>
    <property type="match status" value="1"/>
</dbReference>
<dbReference type="FunFam" id="1.10.533.10:FF:000063">
    <property type="entry name" value="Mitochondrial antiviral-signaling protein"/>
    <property type="match status" value="1"/>
</dbReference>
<dbReference type="Gene3D" id="1.10.533.10">
    <property type="entry name" value="Death Domain, Fas"/>
    <property type="match status" value="1"/>
</dbReference>
<dbReference type="InterPro" id="IPR031964">
    <property type="entry name" value="CARD_dom"/>
</dbReference>
<dbReference type="InterPro" id="IPR042144">
    <property type="entry name" value="CARD_IPS1"/>
</dbReference>
<dbReference type="InterPro" id="IPR011029">
    <property type="entry name" value="DEATH-like_dom_sf"/>
</dbReference>
<dbReference type="InterPro" id="IPR052787">
    <property type="entry name" value="MAVS"/>
</dbReference>
<dbReference type="PANTHER" id="PTHR21446">
    <property type="entry name" value="DUF3504 DOMAIN-CONTAINING PROTEIN"/>
    <property type="match status" value="1"/>
</dbReference>
<dbReference type="PANTHER" id="PTHR21446:SF6">
    <property type="entry name" value="MITOCHONDRIAL ANTIVIRAL-SIGNALING PROTEIN"/>
    <property type="match status" value="1"/>
</dbReference>
<dbReference type="Pfam" id="PF16739">
    <property type="entry name" value="CARD_2"/>
    <property type="match status" value="1"/>
</dbReference>
<accession>Q7Z434</accession>
<accession>A8K6X0</accession>
<accession>B2BD33</accession>
<accession>B2BD34</accession>
<accession>F5H6C8</accession>
<accession>M1P2Z0</accession>
<accession>Q2HWT5</accession>
<accession>Q3I0Y2</accession>
<accession>Q5T7I6</accession>
<accession>Q86VY7</accession>
<accession>Q9H1H3</accession>
<accession>Q9H4Y1</accession>
<accession>Q9H8D3</accession>
<accession>Q9ULE9</accession>
<protein>
    <recommendedName>
        <fullName evidence="73">Mitochondrial antiviral-signaling protein</fullName>
        <shortName evidence="73">MAVS</shortName>
    </recommendedName>
    <alternativeName>
        <fullName evidence="71">CARD adapter inducing interferon beta</fullName>
        <shortName evidence="71">Cardif</shortName>
    </alternativeName>
    <alternativeName>
        <fullName>Interferon beta promoter stimulator protein 1</fullName>
        <shortName>IPS-1</shortName>
    </alternativeName>
    <alternativeName>
        <fullName>Putative NF-kappa-B-activating protein 031N</fullName>
    </alternativeName>
    <alternativeName>
        <fullName>Virus-induced-signaling adapter</fullName>
        <shortName>VISA</shortName>
    </alternativeName>
</protein>
<evidence type="ECO:0000250" key="1"/>
<evidence type="ECO:0000250" key="2">
    <source>
        <dbReference type="UniProtKB" id="Q8VCF0"/>
    </source>
</evidence>
<evidence type="ECO:0000255" key="3"/>
<evidence type="ECO:0000256" key="4">
    <source>
        <dbReference type="SAM" id="MobiDB-lite"/>
    </source>
</evidence>
<evidence type="ECO:0000269" key="5">
    <source>
    </source>
</evidence>
<evidence type="ECO:0000269" key="6">
    <source>
    </source>
</evidence>
<evidence type="ECO:0000269" key="7">
    <source>
    </source>
</evidence>
<evidence type="ECO:0000269" key="8">
    <source>
    </source>
</evidence>
<evidence type="ECO:0000269" key="9">
    <source>
    </source>
</evidence>
<evidence type="ECO:0000269" key="10">
    <source>
    </source>
</evidence>
<evidence type="ECO:0000269" key="11">
    <source>
    </source>
</evidence>
<evidence type="ECO:0000269" key="12">
    <source>
    </source>
</evidence>
<evidence type="ECO:0000269" key="13">
    <source>
    </source>
</evidence>
<evidence type="ECO:0000269" key="14">
    <source>
    </source>
</evidence>
<evidence type="ECO:0000269" key="15">
    <source>
    </source>
</evidence>
<evidence type="ECO:0000269" key="16">
    <source>
    </source>
</evidence>
<evidence type="ECO:0000269" key="17">
    <source>
    </source>
</evidence>
<evidence type="ECO:0000269" key="18">
    <source>
    </source>
</evidence>
<evidence type="ECO:0000269" key="19">
    <source>
    </source>
</evidence>
<evidence type="ECO:0000269" key="20">
    <source>
    </source>
</evidence>
<evidence type="ECO:0000269" key="21">
    <source>
    </source>
</evidence>
<evidence type="ECO:0000269" key="22">
    <source>
    </source>
</evidence>
<evidence type="ECO:0000269" key="23">
    <source>
    </source>
</evidence>
<evidence type="ECO:0000269" key="24">
    <source>
    </source>
</evidence>
<evidence type="ECO:0000269" key="25">
    <source>
    </source>
</evidence>
<evidence type="ECO:0000269" key="26">
    <source>
    </source>
</evidence>
<evidence type="ECO:0000269" key="27">
    <source>
    </source>
</evidence>
<evidence type="ECO:0000269" key="28">
    <source>
    </source>
</evidence>
<evidence type="ECO:0000269" key="29">
    <source>
    </source>
</evidence>
<evidence type="ECO:0000269" key="30">
    <source>
    </source>
</evidence>
<evidence type="ECO:0000269" key="31">
    <source>
    </source>
</evidence>
<evidence type="ECO:0000269" key="32">
    <source>
    </source>
</evidence>
<evidence type="ECO:0000269" key="33">
    <source>
    </source>
</evidence>
<evidence type="ECO:0000269" key="34">
    <source>
    </source>
</evidence>
<evidence type="ECO:0000269" key="35">
    <source>
    </source>
</evidence>
<evidence type="ECO:0000269" key="36">
    <source>
    </source>
</evidence>
<evidence type="ECO:0000269" key="37">
    <source>
    </source>
</evidence>
<evidence type="ECO:0000269" key="38">
    <source>
    </source>
</evidence>
<evidence type="ECO:0000269" key="39">
    <source>
    </source>
</evidence>
<evidence type="ECO:0000269" key="40">
    <source>
    </source>
</evidence>
<evidence type="ECO:0000269" key="41">
    <source>
    </source>
</evidence>
<evidence type="ECO:0000269" key="42">
    <source>
    </source>
</evidence>
<evidence type="ECO:0000269" key="43">
    <source>
    </source>
</evidence>
<evidence type="ECO:0000269" key="44">
    <source>
    </source>
</evidence>
<evidence type="ECO:0000269" key="45">
    <source>
    </source>
</evidence>
<evidence type="ECO:0000269" key="46">
    <source>
    </source>
</evidence>
<evidence type="ECO:0000269" key="47">
    <source>
    </source>
</evidence>
<evidence type="ECO:0000269" key="48">
    <source>
    </source>
</evidence>
<evidence type="ECO:0000269" key="49">
    <source>
    </source>
</evidence>
<evidence type="ECO:0000269" key="50">
    <source>
    </source>
</evidence>
<evidence type="ECO:0000269" key="51">
    <source>
    </source>
</evidence>
<evidence type="ECO:0000269" key="52">
    <source>
    </source>
</evidence>
<evidence type="ECO:0000269" key="53">
    <source>
    </source>
</evidence>
<evidence type="ECO:0000269" key="54">
    <source>
    </source>
</evidence>
<evidence type="ECO:0000269" key="55">
    <source>
    </source>
</evidence>
<evidence type="ECO:0000269" key="56">
    <source>
    </source>
</evidence>
<evidence type="ECO:0000269" key="57">
    <source>
    </source>
</evidence>
<evidence type="ECO:0000269" key="58">
    <source>
    </source>
</evidence>
<evidence type="ECO:0000269" key="59">
    <source>
    </source>
</evidence>
<evidence type="ECO:0000269" key="60">
    <source>
    </source>
</evidence>
<evidence type="ECO:0000269" key="61">
    <source>
    </source>
</evidence>
<evidence type="ECO:0000269" key="62">
    <source>
    </source>
</evidence>
<evidence type="ECO:0000269" key="63">
    <source>
    </source>
</evidence>
<evidence type="ECO:0000269" key="64">
    <source>
    </source>
</evidence>
<evidence type="ECO:0000269" key="65">
    <source>
    </source>
</evidence>
<evidence type="ECO:0000269" key="66">
    <source>
    </source>
</evidence>
<evidence type="ECO:0000269" key="67">
    <source>
    </source>
</evidence>
<evidence type="ECO:0000269" key="68">
    <source>
    </source>
</evidence>
<evidence type="ECO:0000303" key="69">
    <source>
    </source>
</evidence>
<evidence type="ECO:0000303" key="70">
    <source>
    </source>
</evidence>
<evidence type="ECO:0000303" key="71">
    <source>
    </source>
</evidence>
<evidence type="ECO:0000303" key="72">
    <source>
    </source>
</evidence>
<evidence type="ECO:0000305" key="73"/>
<evidence type="ECO:0000312" key="74">
    <source>
        <dbReference type="HGNC" id="HGNC:29233"/>
    </source>
</evidence>
<evidence type="ECO:0007744" key="75">
    <source>
        <dbReference type="PDB" id="5JEK"/>
    </source>
</evidence>
<evidence type="ECO:0007744" key="76">
    <source>
    </source>
</evidence>
<evidence type="ECO:0007744" key="77">
    <source>
    </source>
</evidence>
<evidence type="ECO:0007744" key="78">
    <source>
    </source>
</evidence>
<evidence type="ECO:0007744" key="79">
    <source>
    </source>
</evidence>
<evidence type="ECO:0007744" key="80">
    <source>
    </source>
</evidence>
<evidence type="ECO:0007744" key="81">
    <source>
    </source>
</evidence>
<evidence type="ECO:0007829" key="82">
    <source>
        <dbReference type="PDB" id="2MS8"/>
    </source>
</evidence>
<evidence type="ECO:0007829" key="83">
    <source>
        <dbReference type="PDB" id="2VGQ"/>
    </source>
</evidence>
<evidence type="ECO:0007829" key="84">
    <source>
        <dbReference type="PDB" id="3RC5"/>
    </source>
</evidence>
<evidence type="ECO:0007829" key="85">
    <source>
        <dbReference type="PDB" id="4Z8M"/>
    </source>
</evidence>
<reference key="1">
    <citation type="journal article" date="2005" name="Cell">
        <title>Identification and characterization of MAVS, a mitochondrial antiviral signaling protein that activates NF-kappaB and IRF 3.</title>
        <authorList>
            <person name="Seth R.B."/>
            <person name="Sun L."/>
            <person name="Ea C.-K."/>
            <person name="Chen Z.J."/>
        </authorList>
    </citation>
    <scope>NUCLEOTIDE SEQUENCE [MRNA] (ISOFORM 1)</scope>
    <scope>FUNCTION</scope>
    <scope>TISSUE SPECIFICITY</scope>
    <scope>MUTAGENESIS OF THR-54 AND 67-GLY--VAL-69</scope>
    <scope>INTERACTION WITH RIGI AND TRAF6</scope>
    <scope>SUBCELLULAR LOCATION</scope>
    <scope>VARIANTS LYS-198 AND PHE-409</scope>
</reference>
<reference key="2">
    <citation type="journal article" date="2005" name="Mol. Cell">
        <title>VISA is an adapter protein required for virus-triggered IFN-beta Signaling.</title>
        <authorList>
            <person name="Xu L.-G."/>
            <person name="Wang Y.-Y."/>
            <person name="Han K.-J."/>
            <person name="Li L.-Y."/>
            <person name="Zhai Z."/>
            <person name="Shu H.-B."/>
        </authorList>
    </citation>
    <scope>NUCLEOTIDE SEQUENCE [MRNA]</scope>
    <scope>TISSUE SPECIFICITY</scope>
    <scope>INTERACTION WITH RIGI; IRF3; TRAF2 AND TRAF6</scope>
    <scope>MUTAGENESIS OF GLN-145; GLU-155 AND GLU-457</scope>
    <scope>FUNCTION</scope>
    <scope>VARIANT GLU-93</scope>
</reference>
<reference key="3">
    <citation type="journal article" date="2005" name="Nature">
        <title>Cardif is an adaptor protein in the RIG-I antiviral pathway and is targeted by hepatitis C virus.</title>
        <authorList>
            <person name="Meylan E."/>
            <person name="Curran J."/>
            <person name="Hofmann K."/>
            <person name="Moradpour D."/>
            <person name="Binder M."/>
            <person name="Bartenschlager R."/>
            <person name="Tschopp J."/>
        </authorList>
    </citation>
    <scope>NUCLEOTIDE SEQUENCE [MRNA] (ISOFORM 1)</scope>
    <scope>INTERACTION WITH RIGI; IKBKE; CHUK AND IKBKB</scope>
    <scope>FUNCTION</scope>
    <scope>MUTAGENESIS OF CYS-508</scope>
    <scope>VARIANTS LYS-198 AND PHE-409</scope>
    <scope>INTERACTION WITH HCV NS3/4A PROTEASE (MICROBIAL INFECTION)</scope>
    <scope>PROTEOLYTIC CLEAVAGE (MICROBIAL INFECTION)</scope>
</reference>
<reference key="4">
    <citation type="journal article" date="2005" name="Nat. Immunol.">
        <title>IPS-1, an adaptor triggering RIG-I- and Mda5-mediated type I interferon induction.</title>
        <authorList>
            <person name="Kawai T."/>
            <person name="Takahashi K."/>
            <person name="Sato S."/>
            <person name="Coban C."/>
            <person name="Kumar H."/>
            <person name="Kato H."/>
            <person name="Ishii K.J."/>
            <person name="Takeuchi O."/>
            <person name="Akira S."/>
        </authorList>
    </citation>
    <scope>NUCLEOTIDE SEQUENCE [MRNA] (ISOFORM 1)</scope>
    <scope>TISSUE SPECIFICITY</scope>
    <scope>INTERACTION WITH RIGI; IFIH1/MDA5; FADD AND RIPK1</scope>
    <scope>FUNCTION</scope>
    <scope>VARIANT GLU-93</scope>
</reference>
<reference key="5">
    <citation type="journal article" date="2008" name="Mol. Immunol.">
        <title>Identification of MAVS splicing variants that interfere with RIGI/MAVS pathway signaling.</title>
        <authorList>
            <person name="Lad S.P."/>
            <person name="Yang G."/>
            <person name="Scott D.A."/>
            <person name="Chao T.H."/>
            <person name="Correia Jda S."/>
            <person name="de la Torre J.C."/>
            <person name="Li E."/>
        </authorList>
    </citation>
    <scope>NUCLEOTIDE SEQUENCE [MRNA] (ISOFORMS 5 AND 6)</scope>
</reference>
<reference key="6">
    <citation type="journal article" date="2012" name="PLoS Biol.">
        <title>Convergent evolution of escape from hepaciviral antagonism in primates.</title>
        <authorList>
            <person name="Patel M.R."/>
            <person name="Loo Y.M."/>
            <person name="Horner S.M."/>
            <person name="Gale M. Jr."/>
            <person name="Malik H.S."/>
        </authorList>
    </citation>
    <scope>NUCLEOTIDE SEQUENCE [MRNA] (ISOFORM 1)</scope>
</reference>
<reference key="7">
    <citation type="journal article" date="1999" name="DNA Res.">
        <title>Prediction of the coding sequences of unidentified human genes. XV. The complete sequences of 100 new cDNA clones from brain which code for large proteins in vitro.</title>
        <authorList>
            <person name="Nagase T."/>
            <person name="Ishikawa K."/>
            <person name="Kikuno R."/>
            <person name="Hirosawa M."/>
            <person name="Nomura N."/>
            <person name="Ohara O."/>
        </authorList>
    </citation>
    <scope>NUCLEOTIDE SEQUENCE [LARGE SCALE MRNA] (ISOFORM 1)</scope>
    <source>
        <tissue>Brain</tissue>
    </source>
</reference>
<reference key="8">
    <citation type="journal article" date="2003" name="Oncogene">
        <title>Large-scale identification and characterization of human genes that activate NF-kappaB and MAPK signaling pathways.</title>
        <authorList>
            <person name="Matsuda A."/>
            <person name="Suzuki Y."/>
            <person name="Honda G."/>
            <person name="Muramatsu S."/>
            <person name="Matsuzaki O."/>
            <person name="Nagano Y."/>
            <person name="Doi T."/>
            <person name="Shimotohno K."/>
            <person name="Harada T."/>
            <person name="Nishida E."/>
            <person name="Hayashi H."/>
            <person name="Sugano S."/>
        </authorList>
    </citation>
    <scope>NUCLEOTIDE SEQUENCE [LARGE SCALE MRNA] (ISOFORM 1)</scope>
    <source>
        <tissue>Lung fibroblast</tissue>
    </source>
</reference>
<reference key="9">
    <citation type="journal article" date="2004" name="Nat. Genet.">
        <title>Complete sequencing and characterization of 21,243 full-length human cDNAs.</title>
        <authorList>
            <person name="Ota T."/>
            <person name="Suzuki Y."/>
            <person name="Nishikawa T."/>
            <person name="Otsuki T."/>
            <person name="Sugiyama T."/>
            <person name="Irie R."/>
            <person name="Wakamatsu A."/>
            <person name="Hayashi K."/>
            <person name="Sato H."/>
            <person name="Nagai K."/>
            <person name="Kimura K."/>
            <person name="Makita H."/>
            <person name="Sekine M."/>
            <person name="Obayashi M."/>
            <person name="Nishi T."/>
            <person name="Shibahara T."/>
            <person name="Tanaka T."/>
            <person name="Ishii S."/>
            <person name="Yamamoto J."/>
            <person name="Saito K."/>
            <person name="Kawai Y."/>
            <person name="Isono Y."/>
            <person name="Nakamura Y."/>
            <person name="Nagahari K."/>
            <person name="Murakami K."/>
            <person name="Yasuda T."/>
            <person name="Iwayanagi T."/>
            <person name="Wagatsuma M."/>
            <person name="Shiratori A."/>
            <person name="Sudo H."/>
            <person name="Hosoiri T."/>
            <person name="Kaku Y."/>
            <person name="Kodaira H."/>
            <person name="Kondo H."/>
            <person name="Sugawara M."/>
            <person name="Takahashi M."/>
            <person name="Kanda K."/>
            <person name="Yokoi T."/>
            <person name="Furuya T."/>
            <person name="Kikkawa E."/>
            <person name="Omura Y."/>
            <person name="Abe K."/>
            <person name="Kamihara K."/>
            <person name="Katsuta N."/>
            <person name="Sato K."/>
            <person name="Tanikawa M."/>
            <person name="Yamazaki M."/>
            <person name="Ninomiya K."/>
            <person name="Ishibashi T."/>
            <person name="Yamashita H."/>
            <person name="Murakawa K."/>
            <person name="Fujimori K."/>
            <person name="Tanai H."/>
            <person name="Kimata M."/>
            <person name="Watanabe M."/>
            <person name="Hiraoka S."/>
            <person name="Chiba Y."/>
            <person name="Ishida S."/>
            <person name="Ono Y."/>
            <person name="Takiguchi S."/>
            <person name="Watanabe S."/>
            <person name="Yosida M."/>
            <person name="Hotuta T."/>
            <person name="Kusano J."/>
            <person name="Kanehori K."/>
            <person name="Takahashi-Fujii A."/>
            <person name="Hara H."/>
            <person name="Tanase T.-O."/>
            <person name="Nomura Y."/>
            <person name="Togiya S."/>
            <person name="Komai F."/>
            <person name="Hara R."/>
            <person name="Takeuchi K."/>
            <person name="Arita M."/>
            <person name="Imose N."/>
            <person name="Musashino K."/>
            <person name="Yuuki H."/>
            <person name="Oshima A."/>
            <person name="Sasaki N."/>
            <person name="Aotsuka S."/>
            <person name="Yoshikawa Y."/>
            <person name="Matsunawa H."/>
            <person name="Ichihara T."/>
            <person name="Shiohata N."/>
            <person name="Sano S."/>
            <person name="Moriya S."/>
            <person name="Momiyama H."/>
            <person name="Satoh N."/>
            <person name="Takami S."/>
            <person name="Terashima Y."/>
            <person name="Suzuki O."/>
            <person name="Nakagawa S."/>
            <person name="Senoh A."/>
            <person name="Mizoguchi H."/>
            <person name="Goto Y."/>
            <person name="Shimizu F."/>
            <person name="Wakebe H."/>
            <person name="Hishigaki H."/>
            <person name="Watanabe T."/>
            <person name="Sugiyama A."/>
            <person name="Takemoto M."/>
            <person name="Kawakami B."/>
            <person name="Yamazaki M."/>
            <person name="Watanabe K."/>
            <person name="Kumagai A."/>
            <person name="Itakura S."/>
            <person name="Fukuzumi Y."/>
            <person name="Fujimori Y."/>
            <person name="Komiyama M."/>
            <person name="Tashiro H."/>
            <person name="Tanigami A."/>
            <person name="Fujiwara T."/>
            <person name="Ono T."/>
            <person name="Yamada K."/>
            <person name="Fujii Y."/>
            <person name="Ozaki K."/>
            <person name="Hirao M."/>
            <person name="Ohmori Y."/>
            <person name="Kawabata A."/>
            <person name="Hikiji T."/>
            <person name="Kobatake N."/>
            <person name="Inagaki H."/>
            <person name="Ikema Y."/>
            <person name="Okamoto S."/>
            <person name="Okitani R."/>
            <person name="Kawakami T."/>
            <person name="Noguchi S."/>
            <person name="Itoh T."/>
            <person name="Shigeta K."/>
            <person name="Senba T."/>
            <person name="Matsumura K."/>
            <person name="Nakajima Y."/>
            <person name="Mizuno T."/>
            <person name="Morinaga M."/>
            <person name="Sasaki M."/>
            <person name="Togashi T."/>
            <person name="Oyama M."/>
            <person name="Hata H."/>
            <person name="Watanabe M."/>
            <person name="Komatsu T."/>
            <person name="Mizushima-Sugano J."/>
            <person name="Satoh T."/>
            <person name="Shirai Y."/>
            <person name="Takahashi Y."/>
            <person name="Nakagawa K."/>
            <person name="Okumura K."/>
            <person name="Nagase T."/>
            <person name="Nomura N."/>
            <person name="Kikuchi H."/>
            <person name="Masuho Y."/>
            <person name="Yamashita R."/>
            <person name="Nakai K."/>
            <person name="Yada T."/>
            <person name="Nakamura Y."/>
            <person name="Ohara O."/>
            <person name="Isogai T."/>
            <person name="Sugano S."/>
        </authorList>
    </citation>
    <scope>NUCLEOTIDE SEQUENCE [LARGE SCALE MRNA] (ISOFORMS 1; 2; 3; 4 AND 5)</scope>
    <scope>VARIANT GLU-93</scope>
    <source>
        <tissue>Pericardium</tissue>
        <tissue>Placenta</tissue>
        <tissue>Tongue</tissue>
    </source>
</reference>
<reference key="10">
    <citation type="journal article" date="2001" name="Nature">
        <title>The DNA sequence and comparative analysis of human chromosome 20.</title>
        <authorList>
            <person name="Deloukas P."/>
            <person name="Matthews L.H."/>
            <person name="Ashurst J.L."/>
            <person name="Burton J."/>
            <person name="Gilbert J.G.R."/>
            <person name="Jones M."/>
            <person name="Stavrides G."/>
            <person name="Almeida J.P."/>
            <person name="Babbage A.K."/>
            <person name="Bagguley C.L."/>
            <person name="Bailey J."/>
            <person name="Barlow K.F."/>
            <person name="Bates K.N."/>
            <person name="Beard L.M."/>
            <person name="Beare D.M."/>
            <person name="Beasley O.P."/>
            <person name="Bird C.P."/>
            <person name="Blakey S.E."/>
            <person name="Bridgeman A.M."/>
            <person name="Brown A.J."/>
            <person name="Buck D."/>
            <person name="Burrill W.D."/>
            <person name="Butler A.P."/>
            <person name="Carder C."/>
            <person name="Carter N.P."/>
            <person name="Chapman J.C."/>
            <person name="Clamp M."/>
            <person name="Clark G."/>
            <person name="Clark L.N."/>
            <person name="Clark S.Y."/>
            <person name="Clee C.M."/>
            <person name="Clegg S."/>
            <person name="Cobley V.E."/>
            <person name="Collier R.E."/>
            <person name="Connor R.E."/>
            <person name="Corby N.R."/>
            <person name="Coulson A."/>
            <person name="Coville G.J."/>
            <person name="Deadman R."/>
            <person name="Dhami P.D."/>
            <person name="Dunn M."/>
            <person name="Ellington A.G."/>
            <person name="Frankland J.A."/>
            <person name="Fraser A."/>
            <person name="French L."/>
            <person name="Garner P."/>
            <person name="Grafham D.V."/>
            <person name="Griffiths C."/>
            <person name="Griffiths M.N.D."/>
            <person name="Gwilliam R."/>
            <person name="Hall R.E."/>
            <person name="Hammond S."/>
            <person name="Harley J.L."/>
            <person name="Heath P.D."/>
            <person name="Ho S."/>
            <person name="Holden J.L."/>
            <person name="Howden P.J."/>
            <person name="Huckle E."/>
            <person name="Hunt A.R."/>
            <person name="Hunt S.E."/>
            <person name="Jekosch K."/>
            <person name="Johnson C.M."/>
            <person name="Johnson D."/>
            <person name="Kay M.P."/>
            <person name="Kimberley A.M."/>
            <person name="King A."/>
            <person name="Knights A."/>
            <person name="Laird G.K."/>
            <person name="Lawlor S."/>
            <person name="Lehvaeslaiho M.H."/>
            <person name="Leversha M.A."/>
            <person name="Lloyd C."/>
            <person name="Lloyd D.M."/>
            <person name="Lovell J.D."/>
            <person name="Marsh V.L."/>
            <person name="Martin S.L."/>
            <person name="McConnachie L.J."/>
            <person name="McLay K."/>
            <person name="McMurray A.A."/>
            <person name="Milne S.A."/>
            <person name="Mistry D."/>
            <person name="Moore M.J.F."/>
            <person name="Mullikin J.C."/>
            <person name="Nickerson T."/>
            <person name="Oliver K."/>
            <person name="Parker A."/>
            <person name="Patel R."/>
            <person name="Pearce T.A.V."/>
            <person name="Peck A.I."/>
            <person name="Phillimore B.J.C.T."/>
            <person name="Prathalingam S.R."/>
            <person name="Plumb R.W."/>
            <person name="Ramsay H."/>
            <person name="Rice C.M."/>
            <person name="Ross M.T."/>
            <person name="Scott C.E."/>
            <person name="Sehra H.K."/>
            <person name="Shownkeen R."/>
            <person name="Sims S."/>
            <person name="Skuce C.D."/>
            <person name="Smith M.L."/>
            <person name="Soderlund C."/>
            <person name="Steward C.A."/>
            <person name="Sulston J.E."/>
            <person name="Swann R.M."/>
            <person name="Sycamore N."/>
            <person name="Taylor R."/>
            <person name="Tee L."/>
            <person name="Thomas D.W."/>
            <person name="Thorpe A."/>
            <person name="Tracey A."/>
            <person name="Tromans A.C."/>
            <person name="Vaudin M."/>
            <person name="Wall M."/>
            <person name="Wallis J.M."/>
            <person name="Whitehead S.L."/>
            <person name="Whittaker P."/>
            <person name="Willey D.L."/>
            <person name="Williams L."/>
            <person name="Williams S.A."/>
            <person name="Wilming L."/>
            <person name="Wray P.W."/>
            <person name="Hubbard T."/>
            <person name="Durbin R.M."/>
            <person name="Bentley D.R."/>
            <person name="Beck S."/>
            <person name="Rogers J."/>
        </authorList>
    </citation>
    <scope>NUCLEOTIDE SEQUENCE [LARGE SCALE GENOMIC DNA]</scope>
</reference>
<reference key="11">
    <citation type="submission" date="2005-09" db="EMBL/GenBank/DDBJ databases">
        <authorList>
            <person name="Mural R.J."/>
            <person name="Istrail S."/>
            <person name="Sutton G.G."/>
            <person name="Florea L."/>
            <person name="Halpern A.L."/>
            <person name="Mobarry C.M."/>
            <person name="Lippert R."/>
            <person name="Walenz B."/>
            <person name="Shatkay H."/>
            <person name="Dew I."/>
            <person name="Miller J.R."/>
            <person name="Flanigan M.J."/>
            <person name="Edwards N.J."/>
            <person name="Bolanos R."/>
            <person name="Fasulo D."/>
            <person name="Halldorsson B.V."/>
            <person name="Hannenhalli S."/>
            <person name="Turner R."/>
            <person name="Yooseph S."/>
            <person name="Lu F."/>
            <person name="Nusskern D.R."/>
            <person name="Shue B.C."/>
            <person name="Zheng X.H."/>
            <person name="Zhong F."/>
            <person name="Delcher A.L."/>
            <person name="Huson D.H."/>
            <person name="Kravitz S.A."/>
            <person name="Mouchard L."/>
            <person name="Reinert K."/>
            <person name="Remington K.A."/>
            <person name="Clark A.G."/>
            <person name="Waterman M.S."/>
            <person name="Eichler E.E."/>
            <person name="Adams M.D."/>
            <person name="Hunkapiller M.W."/>
            <person name="Myers E.W."/>
            <person name="Venter J.C."/>
        </authorList>
    </citation>
    <scope>NUCLEOTIDE SEQUENCE [LARGE SCALE GENOMIC DNA]</scope>
</reference>
<reference key="12">
    <citation type="journal article" date="2004" name="Genome Res.">
        <title>The status, quality, and expansion of the NIH full-length cDNA project: the Mammalian Gene Collection (MGC).</title>
        <authorList>
            <consortium name="The MGC Project Team"/>
        </authorList>
    </citation>
    <scope>NUCLEOTIDE SEQUENCE [LARGE SCALE MRNA]</scope>
    <scope>VARIANTS GLU-93; LYS-198 AND PHE-409</scope>
    <source>
        <tissue>Brain</tissue>
    </source>
</reference>
<reference key="13">
    <citation type="journal article" date="2005" name="Proc. Natl. Acad. Sci. U.S.A.">
        <title>Hepatitis C virus protease NS3/4A cleaves mitochondrial antiviral signaling protein off the mitochondria to evade innate immunity.</title>
        <authorList>
            <person name="Li X.D."/>
            <person name="Sun L."/>
            <person name="Seth R.B."/>
            <person name="Pineda G."/>
            <person name="Chen Z.J."/>
        </authorList>
    </citation>
    <scope>INTERACTION WITH HCV NS3/4A PROTEASE (MICROBIAL INFECTION)</scope>
    <scope>MUTAGENESIS OF CYS-435; CYS-452 AND CYS-508</scope>
    <scope>PROTEOLYTIC CLEAVAGE (MICROBIAL INFECTION)</scope>
</reference>
<reference key="14">
    <citation type="journal article" date="2006" name="J. Virol.">
        <title>RNA- and virus-independent inhibition of antiviral signaling by RNA helicase LGP2.</title>
        <authorList>
            <person name="Komuro A."/>
            <person name="Horvath C.M."/>
        </authorList>
    </citation>
    <scope>INTERACTION WITH DHX58/LGP2 AND IKBKE</scope>
</reference>
<reference key="15">
    <citation type="journal article" date="2006" name="Nat. Biotechnol.">
        <title>A probability-based approach for high-throughput protein phosphorylation analysis and site localization.</title>
        <authorList>
            <person name="Beausoleil S.A."/>
            <person name="Villen J."/>
            <person name="Gerber S.A."/>
            <person name="Rush J."/>
            <person name="Gygi S.P."/>
        </authorList>
    </citation>
    <scope>PHOSPHORYLATION [LARGE SCALE ANALYSIS] AT SER-222</scope>
    <scope>IDENTIFICATION BY MASS SPECTROMETRY [LARGE SCALE ANALYSIS]</scope>
    <source>
        <tissue>Cervix carcinoma</tissue>
    </source>
</reference>
<reference key="16">
    <citation type="journal article" date="2007" name="J. Virol.">
        <title>GB virus B disrupts RIG-I signaling by NS3/4A-mediated cleavage of the adaptor protein MAVS.</title>
        <authorList>
            <person name="Chen Z."/>
            <person name="Benureau Y."/>
            <person name="Rijnbrand R."/>
            <person name="Yi J."/>
            <person name="Wang T."/>
            <person name="Warter L."/>
            <person name="Lanford R.E."/>
            <person name="Weinman S.A."/>
            <person name="Lemon S.M."/>
            <person name="Martin A."/>
            <person name="Li K."/>
        </authorList>
    </citation>
    <scope>INTERACTION WITH HEPATITIS GB VIRUS B NS3/4A PROTEASE (MICROBIAL INFECTION)</scope>
    <scope>CLEAVAGE SITE</scope>
    <scope>MUTAGENESIS OF CYS-508</scope>
</reference>
<reference key="17">
    <citation type="journal article" date="2007" name="Proc. Natl. Acad. Sci. U.S.A.">
        <title>Disruption of innate immunity due to mitochondrial targeting of a picornaviral protease precursor.</title>
        <authorList>
            <person name="Yang Y."/>
            <person name="Liang Y."/>
            <person name="Qu L."/>
            <person name="Chen Z."/>
            <person name="Yi M."/>
            <person name="Li K."/>
            <person name="Lemon S.M."/>
        </authorList>
    </citation>
    <scope>CLEAVAGE BY HAV PROTEIN 3CD (MICROBIAL INFECTION)</scope>
    <scope>CLEAVAGE SITE</scope>
    <scope>MUTAGENESIS OF GLN-427 AND GLU-463</scope>
</reference>
<reference key="18">
    <citation type="journal article" date="2007" name="Proc. Natl. Acad. Sci. U.S.A.">
        <title>Negative regulation of the RIG-I signaling by the ubiquitin ligase RNF125.</title>
        <authorList>
            <person name="Arimoto K."/>
            <person name="Takahashi H."/>
            <person name="Hishiki T."/>
            <person name="Konishi H."/>
            <person name="Fujita T."/>
            <person name="Shimotohno K."/>
        </authorList>
    </citation>
    <scope>UBIQUITINATION</scope>
</reference>
<reference key="19">
    <citation type="journal article" date="2007" name="Proc. Natl. Acad. Sci. U.S.A.">
        <title>Negative regulation of MDA5- but not RIG-I-mediated innate antiviral signaling by the dihydroxyacetone kinase.</title>
        <authorList>
            <person name="Diao F."/>
            <person name="Li S."/>
            <person name="Tian Y."/>
            <person name="Zhang M."/>
            <person name="Xu L.G."/>
            <person name="Zhang Y."/>
            <person name="Wang R.P."/>
            <person name="Chen D."/>
            <person name="Zhai Z."/>
            <person name="Zhong B."/>
            <person name="Tien P."/>
            <person name="Shu H.B."/>
        </authorList>
    </citation>
    <scope>INTERACTION WITH IFIH1</scope>
</reference>
<reference key="20">
    <citation type="journal article" date="2007" name="Proc. Natl. Acad. Sci. U.S.A.">
        <title>The Atg5-Atg12 conjugate associates with innate antiviral immune responses.</title>
        <authorList>
            <person name="Jounai N."/>
            <person name="Takeshita F."/>
            <person name="Kobiyama K."/>
            <person name="Sawano A."/>
            <person name="Miyawaki A."/>
            <person name="Xin K.Q."/>
            <person name="Ishii K.J."/>
            <person name="Kawai T."/>
            <person name="Akira S."/>
            <person name="Suzuki K."/>
            <person name="Okuda K."/>
        </authorList>
    </citation>
    <scope>INTERACTION WITH ATG5 AND ATG12</scope>
    <scope>SUBCELLULAR LOCATION</scope>
    <scope>MUTAGENESIS OF THR-54</scope>
</reference>
<reference key="21">
    <citation type="journal article" date="2008" name="EMBO Rep.">
        <title>The tumour suppressor CYLD is a negative regulator of RIG-I-mediated antiviral response.</title>
        <authorList>
            <person name="Friedman C.S."/>
            <person name="O'Donnell M.A."/>
            <person name="Legarda-Addison D."/>
            <person name="Ng A."/>
            <person name="Cardenas W.B."/>
            <person name="Yount J.S."/>
            <person name="Moran T.M."/>
            <person name="Basler C.F."/>
            <person name="Komuro A."/>
            <person name="Horvath C.M."/>
            <person name="Xavier R."/>
            <person name="Ting A.T."/>
        </authorList>
    </citation>
    <scope>INTERACTION WITH CYLD</scope>
</reference>
<reference key="22">
    <citation type="journal article" date="2008" name="J. Proteome Res.">
        <title>Phosphoproteome of resting human platelets.</title>
        <authorList>
            <person name="Zahedi R.P."/>
            <person name="Lewandrowski U."/>
            <person name="Wiesner J."/>
            <person name="Wortelkamp S."/>
            <person name="Moebius J."/>
            <person name="Schuetz C."/>
            <person name="Walter U."/>
            <person name="Gambaryan S."/>
            <person name="Sickmann A."/>
        </authorList>
    </citation>
    <scope>IDENTIFICATION BY MASS SPECTROMETRY [LARGE SCALE ANALYSIS]</scope>
    <source>
        <tissue>Platelet</tissue>
    </source>
</reference>
<reference key="23">
    <citation type="journal article" date="2008" name="Mol. Cell">
        <title>Kinase-selective enrichment enables quantitative phosphoproteomics of the kinome across the cell cycle.</title>
        <authorList>
            <person name="Daub H."/>
            <person name="Olsen J.V."/>
            <person name="Bairlein M."/>
            <person name="Gnad F."/>
            <person name="Oppermann F.S."/>
            <person name="Korner R."/>
            <person name="Greff Z."/>
            <person name="Keri G."/>
            <person name="Stemmann O."/>
            <person name="Mann M."/>
        </authorList>
    </citation>
    <scope>IDENTIFICATION BY MASS SPECTROMETRY [LARGE SCALE ANALYSIS]</scope>
    <source>
        <tissue>Cervix carcinoma</tissue>
    </source>
</reference>
<reference key="24">
    <citation type="journal article" date="2008" name="Nature">
        <title>NLRX1 is a regulator of mitochondrial antiviral immunity.</title>
        <authorList>
            <person name="Moore C.B."/>
            <person name="Bergstralh D.T."/>
            <person name="Duncan J.A."/>
            <person name="Lei Y."/>
            <person name="Morrison T.E."/>
            <person name="Zimmermann A.G."/>
            <person name="Accavitti-Loper M.A."/>
            <person name="Madden V.J."/>
            <person name="Sun L."/>
            <person name="Ye Z."/>
            <person name="Lich J.D."/>
            <person name="Heise M.T."/>
            <person name="Chen Z."/>
            <person name="Ting J.P.-Y."/>
        </authorList>
    </citation>
    <scope>INTERACTION WITH NLRX1</scope>
</reference>
<reference key="25">
    <citation type="journal article" date="2008" name="Proc. Natl. Acad. Sci. U.S.A.">
        <title>A quantitative atlas of mitotic phosphorylation.</title>
        <authorList>
            <person name="Dephoure N."/>
            <person name="Zhou C."/>
            <person name="Villen J."/>
            <person name="Beausoleil S.A."/>
            <person name="Bakalarski C.E."/>
            <person name="Elledge S.J."/>
            <person name="Gygi S.P."/>
        </authorList>
    </citation>
    <scope>PHOSPHORYLATION [LARGE SCALE ANALYSIS] AT SER-152; SER-157; SER-165; SER-222; SER-233; THR-234 AND SER-258</scope>
    <scope>IDENTIFICATION BY MASS SPECTROMETRY [LARGE SCALE ANALYSIS]</scope>
    <source>
        <tissue>Cervix carcinoma</tissue>
    </source>
</reference>
<reference key="26">
    <citation type="journal article" date="2009" name="Anal. Chem.">
        <title>Lys-N and trypsin cover complementary parts of the phosphoproteome in a refined SCX-based approach.</title>
        <authorList>
            <person name="Gauci S."/>
            <person name="Helbig A.O."/>
            <person name="Slijper M."/>
            <person name="Krijgsveld J."/>
            <person name="Heck A.J."/>
            <person name="Mohammed S."/>
        </authorList>
    </citation>
    <scope>IDENTIFICATION BY MASS SPECTROMETRY [LARGE SCALE ANALYSIS]</scope>
</reference>
<reference key="27">
    <citation type="journal article" date="2009" name="Cell">
        <title>RNA polymerase III detects cytosolic DNA and induces type I interferons through the RIG-I pathway.</title>
        <authorList>
            <person name="Chiu Y.-H."/>
            <person name="Macmillan J.B."/>
            <person name="Chen Z.J."/>
        </authorList>
    </citation>
    <scope>FUNCTION</scope>
</reference>
<reference key="28">
    <citation type="journal article" date="2009" name="J. Biol. Chem.">
        <title>The tyrosine kinase c-Src enhances RIG-I (retinoic acid-inducible gene I)-elicited antiviral signaling.</title>
        <authorList>
            <person name="Johnsen I.B."/>
            <person name="Nguyen T.T."/>
            <person name="Bergstroem B."/>
            <person name="Fitzgerald K.A."/>
            <person name="Anthonsen M.W."/>
        </authorList>
    </citation>
    <scope>INTERACTION WITH SRC</scope>
</reference>
<reference key="29">
    <citation type="journal article" date="2009" name="J. Immunol.">
        <title>Negative regulation of MAVS-mediated innate immune response by PSMA7.</title>
        <authorList>
            <person name="Jia Y."/>
            <person name="Song T."/>
            <person name="Wei C."/>
            <person name="Ni C."/>
            <person name="Zheng Z."/>
            <person name="Xu Q."/>
            <person name="Ma H."/>
            <person name="Li L."/>
            <person name="Zhang Y."/>
            <person name="He X."/>
            <person name="Xu Y."/>
            <person name="Shi W."/>
            <person name="Zhong H."/>
        </authorList>
    </citation>
    <scope>INTERACTION WITH PSMA7</scope>
</reference>
<reference key="30">
    <citation type="journal article" date="2009" name="Nat. Immunol.">
        <title>PCBP2 mediates degradation of the adaptor MAVS via the HECT ubiquitin ligase AIP4.</title>
        <authorList>
            <person name="You F."/>
            <person name="Sun H."/>
            <person name="Zhou X."/>
            <person name="Sun W."/>
            <person name="Liang S."/>
            <person name="Zhai Z."/>
            <person name="Jiang Z."/>
        </authorList>
    </citation>
    <scope>INTERACTION WITH PCBP2</scope>
    <scope>UBIQUITINATION BY ITCH</scope>
</reference>
<reference key="31">
    <citation type="journal article" date="2009" name="Proc. Natl. Acad. Sci. U.S.A.">
        <title>Inhibition of RIG-I and MDA5-dependent antiviral response by gC1qR at mitochondria.</title>
        <authorList>
            <person name="Xu L."/>
            <person name="Xiao N."/>
            <person name="Liu F."/>
            <person name="Ren H."/>
            <person name="Gu J."/>
        </authorList>
    </citation>
    <scope>INTERACTION WITH C1QBP</scope>
</reference>
<reference key="32">
    <citation type="journal article" date="2009" name="Proc. Natl. Acad. Sci. U.S.A.">
        <title>ISG56 is a negative-feedback regulator of virus-triggered signaling and cellular antiviral response.</title>
        <authorList>
            <person name="Li Y."/>
            <person name="Li C."/>
            <person name="Xue P."/>
            <person name="Zhong B."/>
            <person name="Mao A.P."/>
            <person name="Ran Y."/>
            <person name="Chen H."/>
            <person name="Wang Y.Y."/>
            <person name="Yang F."/>
            <person name="Shu H.B."/>
        </authorList>
    </citation>
    <scope>INTERACTION WITH STING1</scope>
</reference>
<reference key="33">
    <citation type="journal article" date="2009" name="Sci. Signal.">
        <title>Quantitative phosphoproteomic analysis of T cell receptor signaling reveals system-wide modulation of protein-protein interactions.</title>
        <authorList>
            <person name="Mayya V."/>
            <person name="Lundgren D.H."/>
            <person name="Hwang S.-I."/>
            <person name="Rezaul K."/>
            <person name="Wu L."/>
            <person name="Eng J.K."/>
            <person name="Rodionov V."/>
            <person name="Han D.K."/>
        </authorList>
    </citation>
    <scope>PHOSPHORYLATION [LARGE SCALE ANALYSIS] AT SER-152 AND SER-165</scope>
    <scope>IDENTIFICATION BY MASS SPECTROMETRY [LARGE SCALE ANALYSIS]</scope>
    <source>
        <tissue>Leukemic T-cell</tissue>
    </source>
</reference>
<reference key="34">
    <citation type="journal article" date="2010" name="Cell">
        <title>Peroxisomes are signaling platforms for antiviral innate immunity.</title>
        <authorList>
            <person name="Dixit E."/>
            <person name="Boulant S."/>
            <person name="Zhang Y."/>
            <person name="Lee A.S."/>
            <person name="Odendall C."/>
            <person name="Shum B."/>
            <person name="Hacohen N."/>
            <person name="Chen Z.J."/>
            <person name="Whelan S.P."/>
            <person name="Fransen M."/>
            <person name="Nibert M.L."/>
            <person name="Superti-Furga G."/>
            <person name="Kagan J.C."/>
        </authorList>
    </citation>
    <scope>FUNCTION</scope>
    <scope>SUBCELLULAR LOCATION</scope>
</reference>
<reference key="35">
    <citation type="journal article" date="2010" name="Cell Res.">
        <title>Tom70 mediates activation of interferon regulatory factor 3 on mitochondria.</title>
        <authorList>
            <person name="Liu X.Y."/>
            <person name="Wei B."/>
            <person name="Shi H.X."/>
            <person name="Shan Y.F."/>
            <person name="Wang C."/>
        </authorList>
    </citation>
    <scope>FUNCTION</scope>
    <scope>INTERACTION WITH TOMM70</scope>
    <scope>SUBCELLULAR LOCATION</scope>
</reference>
<reference key="36">
    <citation type="journal article" date="2010" name="Eur. J. Immunol.">
        <title>DEAD/H BOX 3 (DDX3) helicase binds the RIG-I adaptor IPS-1 to up-regulate IFN-beta-inducing potential.</title>
        <authorList>
            <person name="Oshiumi H."/>
            <person name="Sakai K."/>
            <person name="Matsumoto M."/>
            <person name="Seya T."/>
        </authorList>
    </citation>
    <scope>FUNCTION</scope>
    <scope>INTERACTION WITH DDX3X</scope>
    <scope>SUBCELLULAR LOCATION</scope>
</reference>
<reference key="37">
    <citation type="journal article" date="2010" name="PLoS ONE">
        <title>Hepatitis C virus core protein abrogates the DDX3 function that enhances IPS-1-mediated IFN-beta induction.</title>
        <authorList>
            <person name="Oshiumi H."/>
            <person name="Ikeda M."/>
            <person name="Matsumoto M."/>
            <person name="Watanabe A."/>
            <person name="Takeuchi O."/>
            <person name="Akira S."/>
            <person name="Kato N."/>
            <person name="Shimotohno K."/>
            <person name="Seya T."/>
        </authorList>
    </citation>
    <scope>FUNCTION</scope>
    <scope>INTERACTION WITH DDX3X</scope>
    <scope>SUBCELLULAR LOCATION</scope>
</reference>
<reference key="38">
    <citation type="journal article" date="2010" name="Sci. Signal.">
        <title>Quantitative phosphoproteomics reveals widespread full phosphorylation site occupancy during mitosis.</title>
        <authorList>
            <person name="Olsen J.V."/>
            <person name="Vermeulen M."/>
            <person name="Santamaria A."/>
            <person name="Kumar C."/>
            <person name="Miller M.L."/>
            <person name="Jensen L.J."/>
            <person name="Gnad F."/>
            <person name="Cox J."/>
            <person name="Jensen T.S."/>
            <person name="Nigg E.A."/>
            <person name="Brunak S."/>
            <person name="Mann M."/>
        </authorList>
    </citation>
    <scope>PHOSPHORYLATION [LARGE SCALE ANALYSIS] AT SER-253 AND SER-258</scope>
    <scope>IDENTIFICATION BY MASS SPECTROMETRY [LARGE SCALE ANALYSIS]</scope>
    <source>
        <tissue>Cervix carcinoma</tissue>
    </source>
</reference>
<reference key="39">
    <citation type="journal article" date="2011" name="BMC Syst. Biol.">
        <title>Initial characterization of the human central proteome.</title>
        <authorList>
            <person name="Burkard T.R."/>
            <person name="Planyavsky M."/>
            <person name="Kaupe I."/>
            <person name="Breitwieser F.P."/>
            <person name="Buerckstuemmer T."/>
            <person name="Bennett K.L."/>
            <person name="Superti-Furga G."/>
            <person name="Colinge J."/>
        </authorList>
    </citation>
    <scope>IDENTIFICATION BY MASS SPECTROMETRY [LARGE SCALE ANALYSIS]</scope>
</reference>
<reference key="40">
    <citation type="journal article" date="2011" name="PLoS Pathog.">
        <title>The coxsackievirus B 3C protease cleaves MAVS and TRIF to attenuate host type I interferon and apoptotic signaling.</title>
        <authorList>
            <person name="Mukherjee A."/>
            <person name="Morosky S.A."/>
            <person name="Delorme-Axford E."/>
            <person name="Dybdahl-Sissoko N."/>
            <person name="Oberste M.S."/>
            <person name="Wang T."/>
            <person name="Coyne C.B."/>
        </authorList>
    </citation>
    <scope>PROTEOLYTIC CLEAVAGE (MICROBIAL INFECTION)</scope>
    <scope>MUTAGENESIS OF GLN-148</scope>
</reference>
<reference key="41">
    <citation type="journal article" date="2011" name="J. Immunol.">
        <title>IFN-induced TPR protein IFIT3 potentiates antiviral signaling by bridging MAVS and TBK1.</title>
        <authorList>
            <person name="Liu X.Y."/>
            <person name="Chen W."/>
            <person name="Wei B."/>
            <person name="Shan Y.F."/>
            <person name="Wang C."/>
        </authorList>
    </citation>
    <scope>INTERACTION WITH IFIT3 AND TBK1</scope>
</reference>
<reference key="42">
    <citation type="journal article" date="2012" name="J. Immunol.">
        <title>Ndfip1 negatively regulates RIG-I-dependent immune signaling by enhancing E3 ligase Smurf1-mediated MAVS degradation.</title>
        <authorList>
            <person name="Wang Y."/>
            <person name="Tong X."/>
            <person name="Ye X."/>
        </authorList>
    </citation>
    <scope>FUNCTION</scope>
    <scope>INTERACTION WITH NDFIP1 AND SMURF1</scope>
    <scope>UBIQUITINATION BY SMURF1</scope>
</reference>
<reference key="43">
    <citation type="journal article" date="2012" name="PLoS ONE">
        <title>Respiratory syncytial virus NS1 protein colocalizes with mitochondrial antiviral signaling protein MAVS following infection.</title>
        <authorList>
            <person name="Boyapalle S."/>
            <person name="Wong T."/>
            <person name="Garay J."/>
            <person name="Teng M."/>
            <person name="San Juan-Vergara H."/>
            <person name="Mohapatra S."/>
            <person name="Mohapatra S."/>
        </authorList>
    </citation>
    <scope>INTERACTION WITH HRSV NS1 (MICROBIAL INFECTION)</scope>
</reference>
<reference key="44">
    <citation type="journal article" date="2013" name="FEBS Lett.">
        <title>A role for the Ankyrin repeat containing protein Ankrd17 in Nod1- and Nod2-mediated inflammatory responses.</title>
        <authorList>
            <person name="Menning M."/>
            <person name="Kufer T.A."/>
        </authorList>
    </citation>
    <scope>INTERACTION WITH ANKRD17</scope>
</reference>
<reference key="45">
    <citation type="journal article" date="2013" name="Immunol. Cell Biol.">
        <title>Mitochondrially localised MUL1 is a novel modulator of antiviral signaling.</title>
        <authorList>
            <person name="Jenkins K."/>
            <person name="Khoo J.J."/>
            <person name="Sadler A."/>
            <person name="Piganis R."/>
            <person name="Wang D."/>
            <person name="Borg N.A."/>
            <person name="Hjerrild K."/>
            <person name="Gould J."/>
            <person name="Thomas B.J."/>
            <person name="Nagley P."/>
            <person name="Hertzog P.J."/>
            <person name="Mansell A."/>
        </authorList>
    </citation>
    <scope>INTERACTION WITH MUL1</scope>
</reference>
<reference key="46">
    <citation type="journal article" date="2013" name="Cell Rep.">
        <title>UBXN1 interferes with Rig-I-like receptor-mediated antiviral immune response by targeting MAVS.</title>
        <authorList>
            <person name="Wang P."/>
            <person name="Yang L."/>
            <person name="Cheng G."/>
            <person name="Yang G."/>
            <person name="Xu Z."/>
            <person name="You F."/>
            <person name="Sun Q."/>
            <person name="Lin R."/>
            <person name="Fikrig E."/>
            <person name="Sutton R.E."/>
        </authorList>
    </citation>
    <scope>INTERACTION WITH UBXN1</scope>
</reference>
<reference key="47">
    <citation type="journal article" date="2013" name="J. Proteome Res.">
        <title>Toward a comprehensive characterization of a human cancer cell phosphoproteome.</title>
        <authorList>
            <person name="Zhou H."/>
            <person name="Di Palma S."/>
            <person name="Preisinger C."/>
            <person name="Peng M."/>
            <person name="Polat A.N."/>
            <person name="Heck A.J."/>
            <person name="Mohammed S."/>
        </authorList>
    </citation>
    <scope>PHOSPHORYLATION [LARGE SCALE ANALYSIS] AT SER-222</scope>
    <scope>IDENTIFICATION BY MASS SPECTROMETRY [LARGE SCALE ANALYSIS]</scope>
    <source>
        <tissue>Cervix carcinoma</tissue>
        <tissue>Erythroleukemia</tissue>
    </source>
</reference>
<reference key="48">
    <citation type="journal article" date="2013" name="Cell">
        <title>The adaptor MAVS promotes NLRP3 mitochondrial localization and inflammasome activation.</title>
        <authorList>
            <person name="Subramanian N."/>
            <person name="Natarajan K."/>
            <person name="Clatworthy M.R."/>
            <person name="Wang Z."/>
            <person name="Germain R.N."/>
        </authorList>
    </citation>
    <scope>FUNCTION</scope>
    <scope>SUBCELLULAR LOCATION</scope>
    <scope>INTERACTION WITH NLRP3</scope>
    <scope>MUTAGENESIS OF LYS-10; LYS-311 AND LYS-461</scope>
</reference>
<reference key="49">
    <citation type="journal article" date="2014" name="J. Proteomics">
        <title>An enzyme assisted RP-RPLC approach for in-depth analysis of human liver phosphoproteome.</title>
        <authorList>
            <person name="Bian Y."/>
            <person name="Song C."/>
            <person name="Cheng K."/>
            <person name="Dong M."/>
            <person name="Wang F."/>
            <person name="Huang J."/>
            <person name="Sun D."/>
            <person name="Wang L."/>
            <person name="Ye M."/>
            <person name="Zou H."/>
        </authorList>
    </citation>
    <scope>PHOSPHORYLATION [LARGE SCALE ANALYSIS] AT SER-152; SER-165; SER-180; SER-188; THR-215 AND SER-222</scope>
    <scope>IDENTIFICATION BY MASS SPECTROMETRY [LARGE SCALE ANALYSIS]</scope>
    <source>
        <tissue>Liver</tissue>
    </source>
</reference>
<reference key="50">
    <citation type="journal article" date="2014" name="J. Virol.">
        <title>Enterovirus 2Apro targets MDA5 and MAVS in infected cells.</title>
        <authorList>
            <person name="Feng Q."/>
            <person name="Langereis M.A."/>
            <person name="Lork M."/>
            <person name="Nguyen M."/>
            <person name="Hato S.V."/>
            <person name="Lanke K."/>
            <person name="Emdad L."/>
            <person name="Bhoopathi P."/>
            <person name="Fisher P.B."/>
            <person name="Lloyd R.E."/>
            <person name="van Kuppeveld F.J."/>
        </authorList>
    </citation>
    <scope>PROTEOLYTIC CLEAVAGE (MICROBIAL INFECTION)</scope>
</reference>
<reference key="51">
    <citation type="journal article" date="2014" name="J. Immunol.">
        <title>SARS-coronavirus open reading frame-9b suppresses innate immunity by targeting mitochondria and the MAVS/TRAF3/TRAF6 signalosome.</title>
        <authorList>
            <person name="Shi C.S."/>
            <person name="Qi H.Y."/>
            <person name="Boularan C."/>
            <person name="Huang N.N."/>
            <person name="Abu-Asab M."/>
            <person name="Shelhamer J.H."/>
            <person name="Kehrl J.H."/>
        </authorList>
    </citation>
    <scope>INTERACTION WITH SARS-COV VIRUS PROTEIN ORF9B (MICROBIAL INFECTION)</scope>
    <scope>SUBCELLULAR LOCATION</scope>
</reference>
<reference key="52">
    <citation type="journal article" date="2015" name="Science">
        <title>Phosphorylation of innate immune adaptor proteins MAVS, STING, and TRIF induces IRF3 activation.</title>
        <authorList>
            <person name="Liu S."/>
            <person name="Cai X."/>
            <person name="Wu J."/>
            <person name="Cong Q."/>
            <person name="Chen X."/>
            <person name="Li T."/>
            <person name="Du F."/>
            <person name="Ren J."/>
            <person name="Wu Y.T."/>
            <person name="Grishin N.V."/>
            <person name="Chen Z.J."/>
        </authorList>
    </citation>
    <scope>FUNCTION</scope>
    <scope>DOMAIN</scope>
    <scope>INTERACTION WITH IRF3</scope>
    <scope>PHOSPHORYLATION AT SER-442</scope>
    <scope>UBIQUITINATION</scope>
    <scope>MUTAGENESIS OF SER-442</scope>
</reference>
<reference key="53">
    <citation type="journal article" date="2015" name="Proteomics">
        <title>N-terminome analysis of the human mitochondrial proteome.</title>
        <authorList>
            <person name="Vaca Jacome A.S."/>
            <person name="Rabilloud T."/>
            <person name="Schaeffer-Reiss C."/>
            <person name="Rompais M."/>
            <person name="Ayoub D."/>
            <person name="Lane L."/>
            <person name="Bairoch A."/>
            <person name="Van Dorsselaer A."/>
            <person name="Carapito C."/>
        </authorList>
    </citation>
    <scope>IDENTIFICATION BY MASS SPECTROMETRY [LARGE SCALE ANALYSIS]</scope>
</reference>
<reference key="54">
    <citation type="journal article" date="2015" name="J. Innate Immun.">
        <title>ECSIT bridges RIG-I-like receptors to VISA in signaling events of innate antiviral responses.</title>
        <authorList>
            <person name="Lei C.Q."/>
            <person name="Zhang Y."/>
            <person name="Li M."/>
            <person name="Jiang L.Q."/>
            <person name="Zhong B."/>
            <person name="Kim Y.H."/>
            <person name="Shu H.B."/>
        </authorList>
    </citation>
    <scope>INTERACTION WITH ECSIT</scope>
</reference>
<reference key="55">
    <citation type="journal article" date="2015" name="Nat. Commun.">
        <title>The mitochondrial ubiquitin ligase MARCH5 resolves MAVS aggregates during antiviral signalling.</title>
        <authorList>
            <person name="Yoo Y.S."/>
            <person name="Park Y.Y."/>
            <person name="Kim J.H."/>
            <person name="Cho H."/>
            <person name="Kim S.H."/>
            <person name="Lee H.S."/>
            <person name="Kim T.H."/>
            <person name="Sun Kim Y."/>
            <person name="Lee Y."/>
            <person name="Kim C.J."/>
            <person name="Jung J.U."/>
            <person name="Lee J.S."/>
            <person name="Cho H."/>
        </authorList>
    </citation>
    <scope>UBIQUITINATION AT LYS-7 AND LYS-500</scope>
    <scope>SUBUNIT</scope>
    <scope>MUTAGENESIS OF LYS-7 AND LYS-500</scope>
</reference>
<reference key="56">
    <citation type="journal article" date="2017" name="Biochem. J.">
        <title>DDX3 directly regulates TRAF3 ubiquitination and acts as a scaffold to co-ordinate assembly of signalling complexes downstream from MAVS.</title>
        <authorList>
            <person name="Gu L."/>
            <person name="Fullam A."/>
            <person name="McCormack N."/>
            <person name="Hoehn Y."/>
            <person name="Schroeder M."/>
        </authorList>
    </citation>
    <scope>INTERACTION WITH DDX3X AND TRAF3</scope>
</reference>
<reference key="57">
    <citation type="journal article" date="2017" name="Mol. Cell. Biol.">
        <title>TAX1BP1 Restrains Virus-Induced Apoptosis by Facilitating Itch-Mediated Degradation of the Mitochondrial Adaptor MAVS.</title>
        <authorList>
            <person name="Choi Y.B."/>
            <person name="Shembade N."/>
            <person name="Parvatiyar K."/>
            <person name="Balachandran S."/>
            <person name="Harhaj E.W."/>
        </authorList>
    </citation>
    <scope>FUNCTION</scope>
    <scope>INTERACTION WITH TAX1BP1</scope>
    <scope>SUBCELLULAR LOCATION</scope>
</reference>
<reference key="58">
    <citation type="journal article" date="2017" name="J. Immunol.">
        <title>TTLL12 Inhibits the Activation of Cellular Antiviral Signaling through Interaction with VISA/MAVS.</title>
        <authorList>
            <person name="Ju L.G."/>
            <person name="Zhu Y."/>
            <person name="Lei P.J."/>
            <person name="Yan D."/>
            <person name="Zhu K."/>
            <person name="Wang X."/>
            <person name="Li Q.L."/>
            <person name="Li X.J."/>
            <person name="Chen J.W."/>
            <person name="Li L.Y."/>
            <person name="Wu M."/>
        </authorList>
    </citation>
    <scope>INTERACTION WITH TTLL12; TBK1 AND IKBKE</scope>
</reference>
<reference key="59">
    <citation type="journal article" date="2017" name="J. Virol.">
        <title>Seneca Valley virus suppresses host type I interferon production by targeting adaptor proteins MAVS, TRIF, and TANK for cleavage.</title>
        <authorList>
            <person name="Qian S."/>
            <person name="Fan W."/>
            <person name="Liu T."/>
            <person name="Wu M."/>
            <person name="Zhang H."/>
            <person name="Cui X."/>
            <person name="Zhou Y."/>
            <person name="Hu J."/>
            <person name="Wei S."/>
            <person name="Chen H."/>
            <person name="Li X."/>
            <person name="Qian P."/>
        </authorList>
    </citation>
    <scope>INTERACTION WITH SENECA VALLEY VIRUS PROTEASE 3C (MICROBIAL INFECTION)</scope>
    <scope>PROTEOLYTIC CLEAVAGE (MICROBIAL INFECTION)</scope>
    <scope>MUTAGENESIS OF GLN-148; GLN-159; GLN-162; GLN-196 AND GLN-198</scope>
</reference>
<reference key="60">
    <citation type="journal article" date="2017" name="Nat. Immunol.">
        <title>The ubiquitin E3 ligase TRIM31 promotes aggregation and activation of the signaling adaptor MAVS through Lys63-linked polyubiquitination.</title>
        <authorList>
            <person name="Liu B."/>
            <person name="Zhang M."/>
            <person name="Chu H."/>
            <person name="Zhang H."/>
            <person name="Wu H."/>
            <person name="Song G."/>
            <person name="Wang P."/>
            <person name="Zhao K."/>
            <person name="Hou J."/>
            <person name="Wang X."/>
            <person name="Zhang L."/>
            <person name="Gao C."/>
        </authorList>
    </citation>
    <scope>FUNCTION</scope>
    <scope>SUBUNIT</scope>
    <scope>UBIQUITINATION AT LYS-10; LYS-311 AND LYS-461</scope>
</reference>
<reference key="61">
    <citation type="journal article" date="2017" name="PLoS Pathog.">
        <title>Correction: Enterovirus 71 Protease 2Apro Targets MAVS to Inhibit Anti-Viral Type I Interferon Responses.</title>
        <authorList>
            <person name="Wang B."/>
            <person name="Xi X."/>
            <person name="Lei X."/>
            <person name="Zhang X."/>
            <person name="Cui S."/>
            <person name="Wang J."/>
            <person name="Jin Q."/>
            <person name="Zhao Z."/>
        </authorList>
    </citation>
    <scope>PROTEOLYTIC CLEAVAGE (MICROBIAL INFECTION)</scope>
    <scope>MUTAGENESIS OF GLY-209; GLY-251 AND GLY-265</scope>
</reference>
<reference key="62">
    <citation type="journal article" date="2017" name="PLoS Pathog.">
        <title>GPATCH3 negatively regulates RLR-mediated innate antiviral responses by disrupting the assembly of VISA signalosome.</title>
        <authorList>
            <person name="Nie Y."/>
            <person name="Ran Y."/>
            <person name="Zhang H.Y."/>
            <person name="Huang Z.F."/>
            <person name="Pan Z.Y."/>
            <person name="Wang S.Y."/>
            <person name="Wang Y.Y."/>
        </authorList>
    </citation>
    <scope>INTERACTION WITH GPATCH3</scope>
</reference>
<reference key="63">
    <citation type="journal article" date="2018" name="J. Virol.">
        <title>TRIM21 Promotes Innate Immune Response to RNA Viral Infection through Lys27-Linked Polyubiquitination of MAVS.</title>
        <authorList>
            <person name="Xue B."/>
            <person name="Li H."/>
            <person name="Guo M."/>
            <person name="Wang J."/>
            <person name="Xu Y."/>
            <person name="Zou X."/>
            <person name="Deng R."/>
            <person name="Li G."/>
            <person name="Zhu H."/>
        </authorList>
    </citation>
    <scope>FUNCTION</scope>
    <scope>UBIQUITINATION AT LYS-325</scope>
    <scope>MUTAGENESIS OF LYS-325</scope>
    <scope>INTERACTION WITH TBK1</scope>
</reference>
<reference key="64">
    <citation type="journal article" date="2019" name="IScience">
        <title>Structural Basis of Mitochondrial Scaffolds by Prohibitin Complexes: Insight into a Role of the Coiled-Coil Region.</title>
        <authorList>
            <person name="Yoshinaka T."/>
            <person name="Kosako H."/>
            <person name="Yoshizumi T."/>
            <person name="Furukawa R."/>
            <person name="Hirano Y."/>
            <person name="Kuge O."/>
            <person name="Tamada T."/>
            <person name="Koshiba T."/>
        </authorList>
    </citation>
    <scope>INTERACTION WITH CLPB</scope>
</reference>
<reference key="65">
    <citation type="journal article" date="2019" name="EMBO J.">
        <title>TRAF3IP3 mediates the recruitment of TRAF3 to MAVS for antiviral innate immunity.</title>
        <authorList>
            <person name="Zhu W."/>
            <person name="Li J."/>
            <person name="Zhang R."/>
            <person name="Cai Y."/>
            <person name="Wang C."/>
            <person name="Qi S."/>
            <person name="Chen S."/>
            <person name="Liang X."/>
            <person name="Qi N."/>
            <person name="Hou F."/>
        </authorList>
    </citation>
    <scope>INTERACTION WITH TRAF3IP3</scope>
</reference>
<reference key="66">
    <citation type="journal article" date="2019" name="Mol. Cell">
        <title>Apoptotic caspases suppress type i interferon production via the cleavage of cGAS, MAVS, and IRF3.</title>
        <authorList>
            <person name="Ning X."/>
            <person name="Wang Y."/>
            <person name="Jing M."/>
            <person name="Sha M."/>
            <person name="Lv M."/>
            <person name="Gao P."/>
            <person name="Zhang R."/>
            <person name="Huang X."/>
            <person name="Feng J.M."/>
            <person name="Jiang Z."/>
        </authorList>
    </citation>
    <scope>PROTEOLYTIC CLEAVAGE</scope>
    <scope>MUTAGENESIS OF ASP-429 AND ASP-490</scope>
</reference>
<reference key="67">
    <citation type="journal article" date="2020" name="J. Virol.">
        <title>The Andes Orthohantavirus NSs Protein Antagonizes the Type I Interferon Response by Inhibiting MAVS Signaling.</title>
        <authorList>
            <person name="Vera-Otarola J."/>
            <person name="Solis L."/>
            <person name="Lowy F."/>
            <person name="Olguin V."/>
            <person name="Angulo J."/>
            <person name="Pino K."/>
            <person name="Tischler N.D."/>
            <person name="Otth C."/>
            <person name="Padula P."/>
            <person name="Lopez-Lastra M."/>
        </authorList>
    </citation>
    <scope>INTERACTION WITH ANDES HANTAVIRUS NON-STRUCTURAL PROTEIN NS-S (MICROBIAL INFECTION)</scope>
</reference>
<reference key="68">
    <citation type="journal article" date="2020" name="PLoS Pathog.">
        <title>Foot-and-mouth disease virus VP1 target the MAVS to inhibit type-I interferon signaling and VP1 E83K mutation results in virus attenuation.</title>
        <authorList>
            <person name="Ekanayaka P."/>
            <person name="Lee S.Y."/>
            <person name="Herath T.U.B."/>
            <person name="Kim J.H."/>
            <person name="Kim T.H."/>
            <person name="Lee H."/>
            <person name="Chathuranga K."/>
            <person name="Chathuranga W.A.G."/>
            <person name="Park J.H."/>
            <person name="Lee J.S."/>
        </authorList>
    </citation>
    <scope>INTERACTION WITH FOOT-AND-MOUTH DISEASE VIRUS PROTEIN VP1 (MICROBIAL INFECTION)</scope>
</reference>
<reference key="69">
    <citation type="journal article" date="2020" name="Nat. Commun.">
        <title>RNF115 plays dual roles in innate antiviral responses by catalyzing distinct ubiquitination of MAVS and MITA.</title>
        <authorList>
            <person name="Zhang Z.D."/>
            <person name="Xiong T.C."/>
            <person name="Yao S.Q."/>
            <person name="Wei M.C."/>
            <person name="Chen M."/>
            <person name="Lin D."/>
            <person name="Zhong B."/>
        </authorList>
    </citation>
    <scope>FUNCTION</scope>
    <scope>UBIQUITINATION BY RNF115</scope>
</reference>
<reference key="70">
    <citation type="journal article" date="2021" name="Front. Microbiol.">
        <title>N4BP3 Regulates RIG-I-Like Receptor Antiviral Signaling Positively by Targeting Mitochondrial Antiviral Signaling Protein.</title>
        <authorList>
            <person name="Wang C."/>
            <person name="Ling T."/>
            <person name="Zhong N."/>
            <person name="Xu L.G."/>
        </authorList>
    </citation>
    <scope>FUNCTION</scope>
    <scope>INTERACTION WITH N4BP3 AND TRAF2</scope>
    <scope>UBIQUITINATION</scope>
</reference>
<reference key="71">
    <citation type="journal article" date="2023" name="Mol. Cell">
        <title>CPT1A induction following epigenetic perturbation promotes MAVS palmitoylation and activation to potentiate antitumor immunity.</title>
        <authorList>
            <person name="Zhang G."/>
            <person name="Jiang P."/>
            <person name="Tang W."/>
            <person name="Wang Y."/>
            <person name="Qiu F."/>
            <person name="An J."/>
            <person name="Zheng Y."/>
            <person name="Wu D."/>
            <person name="Zhou J."/>
            <person name="Neculai D."/>
            <person name="Shi Y."/>
            <person name="Sheng W."/>
        </authorList>
    </citation>
    <scope>FUNCTION</scope>
    <scope>UBIQUITINATION</scope>
    <scope>PALMITOYLATION AT CYS-79</scope>
    <scope>CHARACTERIZATION OF VARIANT SER-79</scope>
</reference>
<reference key="72">
    <citation type="journal article" date="2014" name="Elife">
        <title>Structural basis for the prion-like MAVS filaments in antiviral innate immunity.</title>
        <authorList>
            <person name="Xu H."/>
            <person name="He X."/>
            <person name="Zheng H."/>
            <person name="Huang L.J."/>
            <person name="Hou F."/>
            <person name="Yu Z."/>
            <person name="de la Cruz M.J."/>
            <person name="Borkowski B."/>
            <person name="Zhang X."/>
            <person name="Chen Z.J."/>
            <person name="Jiang Q.X."/>
        </authorList>
    </citation>
    <scope>STRUCTURE BY ELECTRON MICROSCOPY (9.6 ANGSTROMS) OF 3-93</scope>
    <scope>SUBUNIT</scope>
    <scope>MUTAGENESIS OF GLU-26 AND TRP-56</scope>
</reference>
<reference key="73">
    <citation type="journal article" date="2021" name="Cell. Mol. Immunol.">
        <title>SARS-CoV-2 membrane glycoprotein M antagonizes the MAVS-mediated innate antiviral response.</title>
        <authorList>
            <person name="Fu Y.Z."/>
            <person name="Wang S.Y."/>
            <person name="Zheng Z.Q."/>
            <person name="Yi H."/>
            <person name="Li W.W."/>
            <person name="Xu Z.S."/>
            <person name="Wang Y.Y."/>
        </authorList>
    </citation>
    <scope>INTERACTION WITH SARS-COV-2 VIRUS PROTEIN ORF9B (MICROBIAL INFECTION)</scope>
    <scope>FUNCTION</scope>
</reference>
<reference key="74">
    <citation type="journal article" date="2023" name="Cell Rep.">
        <title>UBL7 enhances antiviral innate immunity by promoting Lys27-linked polyubiquitination of MAVS.</title>
        <authorList>
            <person name="Jiang W."/>
            <person name="Li X."/>
            <person name="Xu H."/>
            <person name="Gu X."/>
            <person name="Li S."/>
            <person name="Zhu L."/>
            <person name="Lu J."/>
            <person name="Duan X."/>
            <person name="Li W."/>
            <person name="Fang M."/>
        </authorList>
    </citation>
    <scope>FUNCTION</scope>
    <scope>INTERACTION WITH UBL7</scope>
    <scope>UBIQUITINATION BY TRIM21</scope>
</reference>
<reference key="75">
    <citation type="journal article" date="2023" name="Mol. Cell">
        <title>An Epstein-Barr virus protein interaction map reveals NLRP3 inflammasome evasion via MAVS UFMylation.</title>
        <authorList>
            <person name="Yiu S.P.T."/>
            <person name="Zerbe C."/>
            <person name="Vanderwall D."/>
            <person name="Huttlin E.L."/>
            <person name="Weekes M.P."/>
            <person name="Gewurz B.E."/>
        </authorList>
    </citation>
    <scope>FUNCTION</scope>
    <scope>INTERACTION WITH EPSTEIN-BARR VIRUS PROTEIN BILF1 (MICROBIAL INFECTION)</scope>
    <scope>SUBCELLULAR LOCATION</scope>
    <scope>UFMYLATION AT LYS-461 (MICROBIAL INFECTION)</scope>
    <scope>MUTAGENESIS OF LYS-461</scope>
</reference>
<reference key="76">
    <citation type="journal article" date="2023" name="Cell. Mol. Immunol.">
        <title>MAVS-loaded unanchored Lys63-linked polyubiquitin chains activate the RIG-I-MAVS signaling cascade.</title>
        <authorList>
            <person name="Liu F."/>
            <person name="Zhuang W."/>
            <person name="Song B."/>
            <person name="Yang Y."/>
            <person name="Liu J."/>
            <person name="Zheng Y."/>
            <person name="Liu B."/>
            <person name="Zheng J."/>
            <person name="Zhao W."/>
            <person name="Gao C."/>
        </authorList>
    </citation>
    <scope>FUNCTION</scope>
    <scope>UBIQUITINATION</scope>
</reference>
<reference key="77">
    <citation type="journal article" date="2023" name="Life. Sci Alliance">
        <title>N-terminal proteoforms may engage in different protein complexes.</title>
        <authorList>
            <person name="Bogaert A."/>
            <person name="Fijalkowska D."/>
            <person name="Staes A."/>
            <person name="Van de Steene T."/>
            <person name="Vuylsteke M."/>
            <person name="Stadler C."/>
            <person name="Eyckerman S."/>
            <person name="Spirohn K."/>
            <person name="Hao T."/>
            <person name="Calderwood M.A."/>
            <person name="Gevaert K."/>
        </authorList>
    </citation>
    <scope>CLEAVAGE OF INITIATOR METHIONINE (ISOFORMS 1 AND 4)</scope>
    <scope>ACETYLATION AT PRO-2 (ISOFORMS 1 AND 4)</scope>
</reference>
<reference key="78">
    <citation type="journal article" date="2023" name="Sci. Adv.">
        <title>MAVI1, an endoplasmic reticulum-localized microprotein, suppresses antiviral innate immune response by targeting MAVS on mitochondrion.</title>
        <authorList>
            <person name="Shi T.T."/>
            <person name="Huang Y."/>
            <person name="Li Y."/>
            <person name="Dai X.L."/>
            <person name="He Y.H."/>
            <person name="Ding J.C."/>
            <person name="Ran T."/>
            <person name="Shi Y."/>
            <person name="Yuan Q."/>
            <person name="Li W.J."/>
            <person name="Liu W."/>
        </authorList>
    </citation>
    <scope>INTERACTION WITH SMIM30</scope>
</reference>
<reference key="79">
    <citation type="journal article" date="2014" name="Mol. Cell">
        <title>Molecular imprinting as a signal-activation mechanism of the viral RNA sensor RIG-I.</title>
        <authorList>
            <person name="Wu B."/>
            <person name="Peisley A."/>
            <person name="Tetrault D."/>
            <person name="Li Z."/>
            <person name="Egelman E.H."/>
            <person name="Magor K.E."/>
            <person name="Walz T."/>
            <person name="Penczek P.A."/>
            <person name="Hur S."/>
        </authorList>
    </citation>
    <scope>X-RAY CRYSTALLOGRAPHY (3.4 ANGSTROMS) OF 1-99 IN COMPLEX WITH RIGI</scope>
    <scope>STRUCTURE BY ELECTRON MICROSCOPY (3.64 ANGSTROMS) OF 1-97</scope>
    <scope>SUBUNIT</scope>
</reference>
<reference evidence="75" key="80">
    <citation type="journal article" date="2016" name="Proc. Natl. Acad. Sci. U.S.A.">
        <title>Structural basis for concerted recruitment and activation of IRF-3 by innate immune adaptor proteins.</title>
        <authorList>
            <person name="Zhao B."/>
            <person name="Shu C."/>
            <person name="Gao X."/>
            <person name="Sankaran B."/>
            <person name="Du F."/>
            <person name="Shelton C.L."/>
            <person name="Herr A.B."/>
            <person name="Ji J.Y."/>
            <person name="Li P."/>
        </authorList>
    </citation>
    <scope>X-RAY CRYSTALLOGRAPHY (2.40 ANGSTROMS) OF 433-450 IN COMPLEX WITH IRF3</scope>
    <scope>INTERACTION WITH IRF3</scope>
    <scope>PHOSPHORYLATION AT SER-442</scope>
    <scope>MUTAGENESIS OF SER-442</scope>
</reference>
<organism>
    <name type="scientific">Homo sapiens</name>
    <name type="common">Human</name>
    <dbReference type="NCBI Taxonomy" id="9606"/>
    <lineage>
        <taxon>Eukaryota</taxon>
        <taxon>Metazoa</taxon>
        <taxon>Chordata</taxon>
        <taxon>Craniata</taxon>
        <taxon>Vertebrata</taxon>
        <taxon>Euteleostomi</taxon>
        <taxon>Mammalia</taxon>
        <taxon>Eutheria</taxon>
        <taxon>Euarchontoglires</taxon>
        <taxon>Primates</taxon>
        <taxon>Haplorrhini</taxon>
        <taxon>Catarrhini</taxon>
        <taxon>Hominidae</taxon>
        <taxon>Homo</taxon>
    </lineage>
</organism>